<sequence>MAASTMSVCSSDLSYGSRVCLPGSCDSCSDSWQVDDCPESCCEPPCCAPAPCLSLVCTPVSYVSSPCCRVTCEPSPCQSGCTSSCTPSCCQQSSCQLACCASSPCQQACCVPVCCKTVCCKPVYCVPVCSGDSSCCQQSSCQSACCTSSPCQQACCVPICCKPVCSGISSSCCQQSSCVSCVSSPCCQAVCEPSPCQSGCISSCTPSCCQQSSCKPACCTSSPCQQACCVPVCCKPVCCVPTCSDDSGSCCQPACCTSSQSQQGCCVPVCCKPVCCVPVCSGASTSCCQQSSCQPACCTTSCCRPSSSVSLLCRPVCRPACCVPVPSCCAPTSSCQASCCRPASCVSLLCRPACSRPACCGPTSTQKSSC</sequence>
<comment type="function">
    <text>In the hair cortex, hair keratin intermediate filaments are embedded in an interfilamentous matrix, consisting of hair keratin-associated proteins (KRTAP), which are essential for the formation of a rigid and resistant hair shaft through their extensive disulfide bond cross-linking with abundant cysteine residues of hair keratins. The matrix proteins include the high-sulfur and high-glycine-tyrosine keratins.</text>
</comment>
<comment type="subunit">
    <text>Interacts with hair keratins.</text>
</comment>
<comment type="interaction">
    <interactant intactId="EBI-10172290">
        <id>P60409</id>
    </interactant>
    <interactant intactId="EBI-640741">
        <id>P01023</id>
        <label>A2M</label>
    </interactant>
    <organismsDiffer>false</organismsDiffer>
    <experiments>3</experiments>
</comment>
<comment type="interaction">
    <interactant intactId="EBI-10172290">
        <id>P60409</id>
    </interactant>
    <interactant intactId="EBI-8637627">
        <id>Q8WTP8</id>
        <label>AEN</label>
    </interactant>
    <organismsDiffer>false</organismsDiffer>
    <experiments>3</experiments>
</comment>
<comment type="interaction">
    <interactant intactId="EBI-10172290">
        <id>P60409</id>
    </interactant>
    <interactant intactId="EBI-2558314">
        <id>P43353</id>
        <label>ALDH3B1</label>
    </interactant>
    <organismsDiffer>false</organismsDiffer>
    <experiments>3</experiments>
</comment>
<comment type="interaction">
    <interactant intactId="EBI-10172290">
        <id>P60409</id>
    </interactant>
    <interactant intactId="EBI-744859">
        <id>Q96IX9</id>
        <label>ANKRD36BP1</label>
    </interactant>
    <organismsDiffer>false</organismsDiffer>
    <experiments>3</experiments>
</comment>
<comment type="interaction">
    <interactant intactId="EBI-10172290">
        <id>P60409</id>
    </interactant>
    <interactant intactId="EBI-541426">
        <id>Q9BXS5</id>
        <label>AP1M1</label>
    </interactant>
    <organismsDiffer>false</organismsDiffer>
    <experiments>6</experiments>
</comment>
<comment type="interaction">
    <interactant intactId="EBI-10172290">
        <id>P60409</id>
    </interactant>
    <interactant intactId="EBI-745213">
        <id>P29972</id>
        <label>AQP1</label>
    </interactant>
    <organismsDiffer>false</organismsDiffer>
    <experiments>3</experiments>
</comment>
<comment type="interaction">
    <interactant intactId="EBI-10172290">
        <id>P60409</id>
    </interactant>
    <interactant intactId="EBI-8640233">
        <id>Q5T686</id>
        <label>AVPI1</label>
    </interactant>
    <organismsDiffer>false</organismsDiffer>
    <experiments>3</experiments>
</comment>
<comment type="interaction">
    <interactant intactId="EBI-10172290">
        <id>P60409</id>
    </interactant>
    <interactant intactId="EBI-10319970">
        <id>Q9UBV7</id>
        <label>B4GALT7</label>
    </interactant>
    <organismsDiffer>false</organismsDiffer>
    <experiments>3</experiments>
</comment>
<comment type="interaction">
    <interactant intactId="EBI-10172290">
        <id>P60409</id>
    </interactant>
    <interactant intactId="EBI-742750">
        <id>Q8TBE0</id>
        <label>BAHD1</label>
    </interactant>
    <organismsDiffer>false</organismsDiffer>
    <experiments>3</experiments>
</comment>
<comment type="interaction">
    <interactant intactId="EBI-10172290">
        <id>P60409</id>
    </interactant>
    <interactant intactId="EBI-10174813">
        <id>A8KA13</id>
        <label>BCL6B</label>
    </interactant>
    <organismsDiffer>false</organismsDiffer>
    <experiments>4</experiments>
</comment>
<comment type="interaction">
    <interactant intactId="EBI-10172290">
        <id>P60409</id>
    </interactant>
    <interactant intactId="EBI-10174327">
        <id>A8K571</id>
        <label>BMP7</label>
    </interactant>
    <organismsDiffer>false</organismsDiffer>
    <experiments>3</experiments>
</comment>
<comment type="interaction">
    <interactant intactId="EBI-10172290">
        <id>P60409</id>
    </interactant>
    <interactant intactId="EBI-741210">
        <id>Q0VDD7</id>
        <label>BRME1</label>
    </interactant>
    <organismsDiffer>false</organismsDiffer>
    <experiments>3</experiments>
</comment>
<comment type="interaction">
    <interactant intactId="EBI-10172290">
        <id>P60409</id>
    </interactant>
    <interactant intactId="EBI-3904603">
        <id>P41223</id>
        <label>BUD31</label>
    </interactant>
    <organismsDiffer>false</organismsDiffer>
    <experiments>6</experiments>
</comment>
<comment type="interaction">
    <interactant intactId="EBI-10172290">
        <id>P60409</id>
    </interactant>
    <interactant intactId="EBI-358049">
        <id>Q13895</id>
        <label>BYSL</label>
    </interactant>
    <organismsDiffer>false</organismsDiffer>
    <experiments>5</experiments>
</comment>
<comment type="interaction">
    <interactant intactId="EBI-10172290">
        <id>P60409</id>
    </interactant>
    <interactant intactId="EBI-715389">
        <id>Q9H7E9</id>
        <label>C8orf33</label>
    </interactant>
    <organismsDiffer>false</organismsDiffer>
    <experiments>3</experiments>
</comment>
<comment type="interaction">
    <interactant intactId="EBI-10172290">
        <id>P60409</id>
    </interactant>
    <interactant intactId="EBI-718719">
        <id>Q9Y2V2</id>
        <label>CARHSP1</label>
    </interactant>
    <organismsDiffer>false</organismsDiffer>
    <experiments>3</experiments>
</comment>
<comment type="interaction">
    <interactant intactId="EBI-10172290">
        <id>P60409</id>
    </interactant>
    <interactant intactId="EBI-10258233">
        <id>Q7Z7H3</id>
        <label>CATIP</label>
    </interactant>
    <organismsDiffer>false</organismsDiffer>
    <experiments>3</experiments>
</comment>
<comment type="interaction">
    <interactant intactId="EBI-10172290">
        <id>P60409</id>
    </interactant>
    <interactant intactId="EBI-745934">
        <id>Q14781</id>
        <label>CBX2</label>
    </interactant>
    <organismsDiffer>false</organismsDiffer>
    <experiments>3</experiments>
</comment>
<comment type="interaction">
    <interactant intactId="EBI-10172290">
        <id>P60409</id>
    </interactant>
    <interactant intactId="EBI-740814">
        <id>Q8N715</id>
        <label>CCDC185</label>
    </interactant>
    <organismsDiffer>false</organismsDiffer>
    <experiments>3</experiments>
</comment>
<comment type="interaction">
    <interactant intactId="EBI-10172290">
        <id>P60409</id>
    </interactant>
    <interactant intactId="EBI-3905829">
        <id>P51959</id>
        <label>CCNG1</label>
    </interactant>
    <organismsDiffer>false</organismsDiffer>
    <experiments>3</experiments>
</comment>
<comment type="interaction">
    <interactant intactId="EBI-10172290">
        <id>P60409</id>
    </interactant>
    <interactant intactId="EBI-5278764">
        <id>Q96GN5</id>
        <label>CDCA7L</label>
    </interactant>
    <organismsDiffer>false</organismsDiffer>
    <experiments>3</experiments>
</comment>
<comment type="interaction">
    <interactant intactId="EBI-10172290">
        <id>P60409</id>
    </interactant>
    <interactant intactId="EBI-741528">
        <id>Q9UKJ5</id>
        <label>CHIC2</label>
    </interactant>
    <organismsDiffer>false</organismsDiffer>
    <experiments>3</experiments>
</comment>
<comment type="interaction">
    <interactant intactId="EBI-10172290">
        <id>P60409</id>
    </interactant>
    <interactant intactId="EBI-947551">
        <id>Q9H2X0</id>
        <label>CHRD</label>
    </interactant>
    <organismsDiffer>false</organismsDiffer>
    <experiments>6</experiments>
</comment>
<comment type="interaction">
    <interactant intactId="EBI-10172290">
        <id>P60409</id>
    </interactant>
    <interactant intactId="EBI-9008836">
        <id>P07510</id>
        <label>CHRNG</label>
    </interactant>
    <organismsDiffer>false</organismsDiffer>
    <experiments>4</experiments>
</comment>
<comment type="interaction">
    <interactant intactId="EBI-10172290">
        <id>P60409</id>
    </interactant>
    <interactant intactId="EBI-11979451">
        <id>P07510-2</id>
        <label>CHRNG</label>
    </interactant>
    <organismsDiffer>false</organismsDiffer>
    <experiments>3</experiments>
</comment>
<comment type="interaction">
    <interactant intactId="EBI-10172290">
        <id>P60409</id>
    </interactant>
    <interactant intactId="EBI-473775">
        <id>P49759</id>
        <label>CLK1</label>
    </interactant>
    <organismsDiffer>false</organismsDiffer>
    <experiments>3</experiments>
</comment>
<comment type="interaction">
    <interactant intactId="EBI-10172290">
        <id>P60409</id>
    </interactant>
    <interactant intactId="EBI-11981867">
        <id>P49759-3</id>
        <label>CLK1</label>
    </interactant>
    <organismsDiffer>false</organismsDiffer>
    <experiments>3</experiments>
</comment>
<comment type="interaction">
    <interactant intactId="EBI-10172290">
        <id>P60409</id>
    </interactant>
    <interactant intactId="EBI-633400">
        <id>Q9HAZ1</id>
        <label>CLK4</label>
    </interactant>
    <organismsDiffer>false</organismsDiffer>
    <experiments>6</experiments>
</comment>
<comment type="interaction">
    <interactant intactId="EBI-10172290">
        <id>P60409</id>
    </interactant>
    <interactant intactId="EBI-741032">
        <id>Q8NE01</id>
        <label>CNNM3</label>
    </interactant>
    <organismsDiffer>false</organismsDiffer>
    <experiments>5</experiments>
</comment>
<comment type="interaction">
    <interactant intactId="EBI-10172290">
        <id>P60409</id>
    </interactant>
    <interactant intactId="EBI-747133">
        <id>P27658</id>
        <label>COL8A1</label>
    </interactant>
    <organismsDiffer>false</organismsDiffer>
    <experiments>3</experiments>
</comment>
<comment type="interaction">
    <interactant intactId="EBI-10172290">
        <id>P60409</id>
    </interactant>
    <interactant intactId="EBI-713677">
        <id>Q9UGL9</id>
        <label>CRCT1</label>
    </interactant>
    <organismsDiffer>false</organismsDiffer>
    <experiments>6</experiments>
</comment>
<comment type="interaction">
    <interactant intactId="EBI-10172290">
        <id>P60409</id>
    </interactant>
    <interactant intactId="EBI-10192698">
        <id>Q02930-3</id>
        <label>CREB5</label>
    </interactant>
    <organismsDiffer>false</organismsDiffer>
    <experiments>4</experiments>
</comment>
<comment type="interaction">
    <interactant intactId="EBI-10172290">
        <id>P60409</id>
    </interactant>
    <interactant intactId="EBI-2212355">
        <id>Q49AN0</id>
        <label>CRY2</label>
    </interactant>
    <organismsDiffer>false</organismsDiffer>
    <experiments>3</experiments>
</comment>
<comment type="interaction">
    <interactant intactId="EBI-10172290">
        <id>P60409</id>
    </interactant>
    <interactant intactId="EBI-1383814">
        <id>Q9HCP0</id>
        <label>CSNK1G1</label>
    </interactant>
    <organismsDiffer>false</organismsDiffer>
    <experiments>3</experiments>
</comment>
<comment type="interaction">
    <interactant intactId="EBI-10172290">
        <id>P60409</id>
    </interactant>
    <interactant intactId="EBI-748380">
        <id>P78368</id>
        <label>CSNK1G2</label>
    </interactant>
    <organismsDiffer>false</organismsDiffer>
    <experiments>3</experiments>
</comment>
<comment type="interaction">
    <interactant intactId="EBI-10172290">
        <id>P60409</id>
    </interactant>
    <interactant intactId="EBI-747082">
        <id>Q9NSA3</id>
        <label>CTNNBIP1</label>
    </interactant>
    <organismsDiffer>false</organismsDiffer>
    <experiments>3</experiments>
</comment>
<comment type="interaction">
    <interactant intactId="EBI-10172290">
        <id>P60409</id>
    </interactant>
    <interactant intactId="EBI-10295404">
        <id>Q99895</id>
        <label>CTRC</label>
    </interactant>
    <organismsDiffer>false</organismsDiffer>
    <experiments>3</experiments>
</comment>
<comment type="interaction">
    <interactant intactId="EBI-10172290">
        <id>P60409</id>
    </interactant>
    <interactant intactId="EBI-3867333">
        <id>A8MQ03</id>
        <label>CYSRT1</label>
    </interactant>
    <organismsDiffer>false</organismsDiffer>
    <experiments>3</experiments>
</comment>
<comment type="interaction">
    <interactant intactId="EBI-10172290">
        <id>P60409</id>
    </interactant>
    <interactant intactId="EBI-7962814">
        <id>Q9GZP9</id>
        <label>DERL2</label>
    </interactant>
    <organismsDiffer>false</organismsDiffer>
    <experiments>3</experiments>
</comment>
<comment type="interaction">
    <interactant intactId="EBI-10172290">
        <id>P60409</id>
    </interactant>
    <interactant intactId="EBI-1051531">
        <id>Q6P158</id>
        <label>DHX57</label>
    </interactant>
    <organismsDiffer>false</organismsDiffer>
    <experiments>6</experiments>
</comment>
<comment type="interaction">
    <interactant intactId="EBI-10172290">
        <id>P60409</id>
    </interactant>
    <interactant intactId="EBI-9679045">
        <id>Q9NQL9</id>
        <label>DMRT3</label>
    </interactant>
    <organismsDiffer>false</organismsDiffer>
    <experiments>3</experiments>
</comment>
<comment type="interaction">
    <interactant intactId="EBI-10172290">
        <id>P60409</id>
    </interactant>
    <interactant intactId="EBI-448771">
        <id>Q92608</id>
        <label>DOCK2</label>
    </interactant>
    <organismsDiffer>false</organismsDiffer>
    <experiments>5</experiments>
</comment>
<comment type="interaction">
    <interactant intactId="EBI-10172290">
        <id>P60409</id>
    </interactant>
    <interactant intactId="EBI-749694">
        <id>O75461</id>
        <label>E2F6</label>
    </interactant>
    <organismsDiffer>false</organismsDiffer>
    <experiments>3</experiments>
</comment>
<comment type="interaction">
    <interactant intactId="EBI-10172290">
        <id>P60409</id>
    </interactant>
    <interactant intactId="EBI-10178160">
        <id>H3BUJ7</id>
        <label>E4F1</label>
    </interactant>
    <organismsDiffer>false</organismsDiffer>
    <experiments>3</experiments>
</comment>
<comment type="interaction">
    <interactant intactId="EBI-10172290">
        <id>P60409</id>
    </interactant>
    <interactant intactId="EBI-2339219">
        <id>Q08426</id>
        <label>EHHADH</label>
    </interactant>
    <organismsDiffer>false</organismsDiffer>
    <experiments>3</experiments>
</comment>
<comment type="interaction">
    <interactant intactId="EBI-10172290">
        <id>P60409</id>
    </interactant>
    <interactant intactId="EBI-3943864">
        <id>Q8N9I5</id>
        <label>FADS6</label>
    </interactant>
    <organismsDiffer>false</organismsDiffer>
    <experiments>3</experiments>
</comment>
<comment type="interaction">
    <interactant intactId="EBI-10172290">
        <id>P60409</id>
    </interactant>
    <interactant intactId="EBI-741626">
        <id>Q9H5Z6</id>
        <label>FAM124B</label>
    </interactant>
    <organismsDiffer>false</organismsDiffer>
    <experiments>3</experiments>
</comment>
<comment type="interaction">
    <interactant intactId="EBI-10172290">
        <id>P60409</id>
    </interactant>
    <interactant intactId="EBI-719941">
        <id>Q3B820</id>
        <label>FAM161A</label>
    </interactant>
    <organismsDiffer>false</organismsDiffer>
    <experiments>3</experiments>
</comment>
<comment type="interaction">
    <interactant intactId="EBI-10172290">
        <id>P60409</id>
    </interactant>
    <interactant intactId="EBI-2602739">
        <id>Q08E93</id>
        <label>FAM27E3</label>
    </interactant>
    <organismsDiffer>false</organismsDiffer>
    <experiments>3</experiments>
</comment>
<comment type="interaction">
    <interactant intactId="EBI-10172290">
        <id>P60409</id>
    </interactant>
    <interactant intactId="EBI-751192">
        <id>Q5HYJ3</id>
        <label>FAM76B</label>
    </interactant>
    <organismsDiffer>false</organismsDiffer>
    <experiments>3</experiments>
</comment>
<comment type="interaction">
    <interactant intactId="EBI-10172290">
        <id>P60409</id>
    </interactant>
    <interactant intactId="EBI-2513774">
        <id>O95363</id>
        <label>FARS2</label>
    </interactant>
    <organismsDiffer>false</organismsDiffer>
    <experiments>6</experiments>
</comment>
<comment type="interaction">
    <interactant intactId="EBI-10172290">
        <id>P60409</id>
    </interactant>
    <interactant intactId="EBI-746969">
        <id>Q9H0R8</id>
        <label>GABARAPL1</label>
    </interactant>
    <organismsDiffer>false</organismsDiffer>
    <experiments>3</experiments>
</comment>
<comment type="interaction">
    <interactant intactId="EBI-10172290">
        <id>P60409</id>
    </interactant>
    <interactant intactId="EBI-720116">
        <id>P60520</id>
        <label>GABARAPL2</label>
    </interactant>
    <organismsDiffer>false</organismsDiffer>
    <experiments>6</experiments>
</comment>
<comment type="interaction">
    <interactant intactId="EBI-10172290">
        <id>P60409</id>
    </interactant>
    <interactant intactId="EBI-744104">
        <id>P55040</id>
        <label>GEM</label>
    </interactant>
    <organismsDiffer>false</organismsDiffer>
    <experiments>6</experiments>
</comment>
<comment type="interaction">
    <interactant intactId="EBI-10172290">
        <id>P60409</id>
    </interactant>
    <interactant intactId="EBI-7466542">
        <id>P43220</id>
        <label>GLP1R</label>
    </interactant>
    <organismsDiffer>false</organismsDiffer>
    <experiments>3</experiments>
</comment>
<comment type="interaction">
    <interactant intactId="EBI-10172290">
        <id>P60409</id>
    </interactant>
    <interactant intactId="EBI-4291090">
        <id>Q9Y223</id>
        <label>GNE</label>
    </interactant>
    <organismsDiffer>false</organismsDiffer>
    <experiments>3</experiments>
</comment>
<comment type="interaction">
    <interactant intactId="EBI-10172290">
        <id>P60409</id>
    </interactant>
    <interactant intactId="EBI-11975289">
        <id>Q9Y223-2</id>
        <label>GNE</label>
    </interactant>
    <organismsDiffer>false</organismsDiffer>
    <experiments>3</experiments>
</comment>
<comment type="interaction">
    <interactant intactId="EBI-10172290">
        <id>P60409</id>
    </interactant>
    <interactant intactId="EBI-10181276">
        <id>Q0D2H9</id>
        <label>GOLGA8DP</label>
    </interactant>
    <organismsDiffer>false</organismsDiffer>
    <experiments>3</experiments>
</comment>
<comment type="interaction">
    <interactant intactId="EBI-10172290">
        <id>P60409</id>
    </interactant>
    <interactant intactId="EBI-747754">
        <id>P28799</id>
        <label>GRN</label>
    </interactant>
    <organismsDiffer>false</organismsDiffer>
    <experiments>3</experiments>
</comment>
<comment type="interaction">
    <interactant intactId="EBI-10172290">
        <id>P60409</id>
    </interactant>
    <interactant intactId="EBI-353467">
        <id>P09211</id>
        <label>GSTP1</label>
    </interactant>
    <organismsDiffer>false</organismsDiffer>
    <experiments>6</experiments>
</comment>
<comment type="interaction">
    <interactant intactId="EBI-10172290">
        <id>P60409</id>
    </interactant>
    <interactant intactId="EBI-8293751">
        <id>Q96NT3</id>
        <label>GUCD1</label>
    </interactant>
    <organismsDiffer>false</organismsDiffer>
    <experiments>3</experiments>
</comment>
<comment type="interaction">
    <interactant intactId="EBI-10172290">
        <id>P60409</id>
    </interactant>
    <interactant intactId="EBI-719843">
        <id>P02008</id>
        <label>HBZ</label>
    </interactant>
    <organismsDiffer>false</organismsDiffer>
    <experiments>3</experiments>
</comment>
<comment type="interaction">
    <interactant intactId="EBI-10172290">
        <id>P60409</id>
    </interactant>
    <interactant intactId="EBI-9834454">
        <id>P08631-2</id>
        <label>HCK</label>
    </interactant>
    <organismsDiffer>false</organismsDiffer>
    <experiments>3</experiments>
</comment>
<comment type="interaction">
    <interactant intactId="EBI-10172290">
        <id>P60409</id>
    </interactant>
    <interactant intactId="EBI-747421">
        <id>Q03014</id>
        <label>HHEX</label>
    </interactant>
    <organismsDiffer>false</organismsDiffer>
    <experiments>3</experiments>
</comment>
<comment type="interaction">
    <interactant intactId="EBI-10172290">
        <id>P60409</id>
    </interactant>
    <interactant intactId="EBI-740785">
        <id>P49639</id>
        <label>HOXA1</label>
    </interactant>
    <organismsDiffer>false</organismsDiffer>
    <experiments>5</experiments>
</comment>
<comment type="interaction">
    <interactant intactId="EBI-10172290">
        <id>P60409</id>
    </interactant>
    <interactant intactId="EBI-1752118">
        <id>P31273</id>
        <label>HOXC8</label>
    </interactant>
    <organismsDiffer>false</organismsDiffer>
    <experiments>3</experiments>
</comment>
<comment type="interaction">
    <interactant intactId="EBI-10172290">
        <id>P60409</id>
    </interactant>
    <interactant intactId="EBI-749311">
        <id>P37235</id>
        <label>HPCAL1</label>
    </interactant>
    <organismsDiffer>false</organismsDiffer>
    <experiments>3</experiments>
</comment>
<comment type="interaction">
    <interactant intactId="EBI-10172290">
        <id>P60409</id>
    </interactant>
    <interactant intactId="EBI-748664">
        <id>O75506</id>
        <label>HSBP1</label>
    </interactant>
    <organismsDiffer>false</organismsDiffer>
    <experiments>3</experiments>
</comment>
<comment type="interaction">
    <interactant intactId="EBI-10172290">
        <id>P60409</id>
    </interactant>
    <interactant intactId="EBI-3918847">
        <id>Q9H2F3</id>
        <label>HSD3B7</label>
    </interactant>
    <organismsDiffer>false</organismsDiffer>
    <experiments>3</experiments>
</comment>
<comment type="interaction">
    <interactant intactId="EBI-10172290">
        <id>P60409</id>
    </interactant>
    <interactant intactId="EBI-466029">
        <id>P42858</id>
        <label>HTT</label>
    </interactant>
    <organismsDiffer>false</organismsDiffer>
    <experiments>9</experiments>
</comment>
<comment type="interaction">
    <interactant intactId="EBI-10172290">
        <id>P60409</id>
    </interactant>
    <interactant intactId="EBI-8293590">
        <id>Q969P0</id>
        <label>IGSF8</label>
    </interactant>
    <organismsDiffer>false</organismsDiffer>
    <experiments>6</experiments>
</comment>
<comment type="interaction">
    <interactant intactId="EBI-10172290">
        <id>P60409</id>
    </interactant>
    <interactant intactId="EBI-488533">
        <id>Q8WYH8</id>
        <label>ING5</label>
    </interactant>
    <organismsDiffer>false</organismsDiffer>
    <experiments>3</experiments>
</comment>
<comment type="interaction">
    <interactant intactId="EBI-10172290">
        <id>P60409</id>
    </interactant>
    <interactant intactId="EBI-1380477">
        <id>Q92835</id>
        <label>INPP5D</label>
    </interactant>
    <organismsDiffer>false</organismsDiffer>
    <experiments>3</experiments>
</comment>
<comment type="interaction">
    <interactant intactId="EBI-10172290">
        <id>P60409</id>
    </interactant>
    <interactant intactId="EBI-10220600">
        <id>Q8NA54</id>
        <label>IQUB</label>
    </interactant>
    <organismsDiffer>false</organismsDiffer>
    <experiments>3</experiments>
</comment>
<comment type="interaction">
    <interactant intactId="EBI-10172290">
        <id>P60409</id>
    </interactant>
    <interactant intactId="EBI-11051601">
        <id>P16144-2</id>
        <label>ITGB4</label>
    </interactant>
    <organismsDiffer>false</organismsDiffer>
    <experiments>3</experiments>
</comment>
<comment type="interaction">
    <interactant intactId="EBI-10172290">
        <id>P60409</id>
    </interactant>
    <interactant intactId="EBI-1223434">
        <id>P18084</id>
        <label>ITGB5</label>
    </interactant>
    <organismsDiffer>false</organismsDiffer>
    <experiments>3</experiments>
</comment>
<comment type="interaction">
    <interactant intactId="EBI-10172290">
        <id>P60409</id>
    </interactant>
    <interactant intactId="EBI-6426443">
        <id>Q2WGJ6</id>
        <label>KLHL38</label>
    </interactant>
    <organismsDiffer>false</organismsDiffer>
    <experiments>6</experiments>
</comment>
<comment type="interaction">
    <interactant intactId="EBI-10172290">
        <id>P60409</id>
    </interactant>
    <interactant intactId="EBI-742094">
        <id>P35900</id>
        <label>KRT20</label>
    </interactant>
    <organismsDiffer>false</organismsDiffer>
    <experiments>3</experiments>
</comment>
<comment type="interaction">
    <interactant intactId="EBI-10172290">
        <id>P60409</id>
    </interactant>
    <interactant intactId="EBI-10221390">
        <id>P78385</id>
        <label>KRT83</label>
    </interactant>
    <organismsDiffer>false</organismsDiffer>
    <experiments>3</experiments>
</comment>
<comment type="interaction">
    <interactant intactId="EBI-10172290">
        <id>P60409</id>
    </interactant>
    <interactant intactId="EBI-10172150">
        <id>P60370</id>
        <label>KRTAP10-5</label>
    </interactant>
    <organismsDiffer>false</organismsDiffer>
    <experiments>3</experiments>
</comment>
<comment type="interaction">
    <interactant intactId="EBI-10172290">
        <id>P60409</id>
    </interactant>
    <interactant intactId="EBI-10172290">
        <id>P60409</id>
        <label>KRTAP10-7</label>
    </interactant>
    <organismsDiffer>false</organismsDiffer>
    <experiments>3</experiments>
</comment>
<comment type="interaction">
    <interactant intactId="EBI-10172290">
        <id>P60409</id>
    </interactant>
    <interactant intactId="EBI-10171774">
        <id>P60410</id>
        <label>KRTAP10-8</label>
    </interactant>
    <organismsDiffer>false</organismsDiffer>
    <experiments>6</experiments>
</comment>
<comment type="interaction">
    <interactant intactId="EBI-10172290">
        <id>P60409</id>
    </interactant>
    <interactant intactId="EBI-10172052">
        <id>P60411</id>
        <label>KRTAP10-9</label>
    </interactant>
    <organismsDiffer>false</organismsDiffer>
    <experiments>6</experiments>
</comment>
<comment type="interaction">
    <interactant intactId="EBI-10172290">
        <id>P60409</id>
    </interactant>
    <interactant intactId="EBI-10210845">
        <id>P59990</id>
        <label>KRTAP12-1</label>
    </interactant>
    <organismsDiffer>false</organismsDiffer>
    <experiments>6</experiments>
</comment>
<comment type="interaction">
    <interactant intactId="EBI-10172290">
        <id>P60409</id>
    </interactant>
    <interactant intactId="EBI-11953334">
        <id>P60328</id>
        <label>KRTAP12-3</label>
    </interactant>
    <organismsDiffer>false</organismsDiffer>
    <experiments>3</experiments>
</comment>
<comment type="interaction">
    <interactant intactId="EBI-10172290">
        <id>P60409</id>
    </interactant>
    <interactant intactId="EBI-3957672">
        <id>Q6PEX3</id>
        <label>KRTAP26-1</label>
    </interactant>
    <organismsDiffer>false</organismsDiffer>
    <experiments>3</experiments>
</comment>
<comment type="interaction">
    <interactant intactId="EBI-10172290">
        <id>P60409</id>
    </interactant>
    <interactant intactId="EBI-10172511">
        <id>Q9BYR5</id>
        <label>KRTAP4-2</label>
    </interactant>
    <organismsDiffer>false</organismsDiffer>
    <experiments>3</experiments>
</comment>
<comment type="interaction">
    <interactant intactId="EBI-10172290">
        <id>P60409</id>
    </interactant>
    <interactant intactId="EBI-11993254">
        <id>Q9BYR2</id>
        <label>KRTAP4-5</label>
    </interactant>
    <organismsDiffer>false</organismsDiffer>
    <experiments>3</experiments>
</comment>
<comment type="interaction">
    <interactant intactId="EBI-10172290">
        <id>P60409</id>
    </interactant>
    <interactant intactId="EBI-11993296">
        <id>Q6L8G4</id>
        <label>KRTAP5-11</label>
    </interactant>
    <organismsDiffer>false</organismsDiffer>
    <experiments>3</experiments>
</comment>
<comment type="interaction">
    <interactant intactId="EBI-10172290">
        <id>P60409</id>
    </interactant>
    <interactant intactId="EBI-11958178">
        <id>Q701N4</id>
        <label>KRTAP5-2</label>
    </interactant>
    <organismsDiffer>false</organismsDiffer>
    <experiments>3</experiments>
</comment>
<comment type="interaction">
    <interactant intactId="EBI-10172290">
        <id>P60409</id>
    </interactant>
    <interactant intactId="EBI-10250562">
        <id>Q6L8G9</id>
        <label>KRTAP5-6</label>
    </interactant>
    <organismsDiffer>false</organismsDiffer>
    <experiments>6</experiments>
</comment>
<comment type="interaction">
    <interactant intactId="EBI-10172290">
        <id>P60409</id>
    </interactant>
    <interactant intactId="EBI-3958099">
        <id>P26371</id>
        <label>KRTAP5-9</label>
    </interactant>
    <organismsDiffer>false</organismsDiffer>
    <experiments>5</experiments>
</comment>
<comment type="interaction">
    <interactant intactId="EBI-10172290">
        <id>P60409</id>
    </interactant>
    <interactant intactId="EBI-1044640">
        <id>Q9BYQ4</id>
        <label>KRTAP9-2</label>
    </interactant>
    <organismsDiffer>false</organismsDiffer>
    <experiments>6</experiments>
</comment>
<comment type="interaction">
    <interactant intactId="EBI-10172290">
        <id>P60409</id>
    </interactant>
    <interactant intactId="EBI-1043191">
        <id>Q9BYQ3</id>
        <label>KRTAP9-3</label>
    </interactant>
    <organismsDiffer>false</organismsDiffer>
    <experiments>3</experiments>
</comment>
<comment type="interaction">
    <interactant intactId="EBI-10172290">
        <id>P60409</id>
    </interactant>
    <interactant intactId="EBI-11958364">
        <id>Q9BYQ0</id>
        <label>KRTAP9-8</label>
    </interactant>
    <organismsDiffer>false</organismsDiffer>
    <experiments>3</experiments>
</comment>
<comment type="interaction">
    <interactant intactId="EBI-10172290">
        <id>P60409</id>
    </interactant>
    <interactant intactId="EBI-11962058">
        <id>Q5T7P2</id>
        <label>LCE1A</label>
    </interactant>
    <organismsDiffer>false</organismsDiffer>
    <experiments>3</experiments>
</comment>
<comment type="interaction">
    <interactant intactId="EBI-10172290">
        <id>P60409</id>
    </interactant>
    <interactant intactId="EBI-10245913">
        <id>Q5T7P3</id>
        <label>LCE1B</label>
    </interactant>
    <organismsDiffer>false</organismsDiffer>
    <experiments>9</experiments>
</comment>
<comment type="interaction">
    <interactant intactId="EBI-10172290">
        <id>P60409</id>
    </interactant>
    <interactant intactId="EBI-11741311">
        <id>Q5T752</id>
        <label>LCE1D</label>
    </interactant>
    <organismsDiffer>false</organismsDiffer>
    <experiments>3</experiments>
</comment>
<comment type="interaction">
    <interactant intactId="EBI-10172290">
        <id>P60409</id>
    </interactant>
    <interactant intactId="EBI-11958008">
        <id>Q5T754</id>
        <label>LCE1F</label>
    </interactant>
    <organismsDiffer>false</organismsDiffer>
    <experiments>5</experiments>
</comment>
<comment type="interaction">
    <interactant intactId="EBI-10172290">
        <id>P60409</id>
    </interactant>
    <interactant intactId="EBI-10246607">
        <id>Q5TA79</id>
        <label>LCE2A</label>
    </interactant>
    <organismsDiffer>false</organismsDiffer>
    <experiments>3</experiments>
</comment>
<comment type="interaction">
    <interactant intactId="EBI-10172290">
        <id>P60409</id>
    </interactant>
    <interactant intactId="EBI-11478468">
        <id>O14633</id>
        <label>LCE2B</label>
    </interactant>
    <organismsDiffer>false</organismsDiffer>
    <experiments>5</experiments>
</comment>
<comment type="interaction">
    <interactant intactId="EBI-10172290">
        <id>P60409</id>
    </interactant>
    <interactant intactId="EBI-11973993">
        <id>Q5TA81</id>
        <label>LCE2C</label>
    </interactant>
    <organismsDiffer>false</organismsDiffer>
    <experiments>5</experiments>
</comment>
<comment type="interaction">
    <interactant intactId="EBI-10172290">
        <id>P60409</id>
    </interactant>
    <interactant intactId="EBI-9394625">
        <id>Q5TA76</id>
        <label>LCE3A</label>
    </interactant>
    <organismsDiffer>false</organismsDiffer>
    <experiments>3</experiments>
</comment>
<comment type="interaction">
    <interactant intactId="EBI-10172290">
        <id>P60409</id>
    </interactant>
    <interactant intactId="EBI-11974495">
        <id>Q5TA77</id>
        <label>LCE3B</label>
    </interactant>
    <organismsDiffer>false</organismsDiffer>
    <experiments>3</experiments>
</comment>
<comment type="interaction">
    <interactant intactId="EBI-10172290">
        <id>P60409</id>
    </interactant>
    <interactant intactId="EBI-10245291">
        <id>Q5T5A8</id>
        <label>LCE3C</label>
    </interactant>
    <organismsDiffer>false</organismsDiffer>
    <experiments>3</experiments>
</comment>
<comment type="interaction">
    <interactant intactId="EBI-10172290">
        <id>P60409</id>
    </interactant>
    <interactant intactId="EBI-6658837">
        <id>Q9BYE3</id>
        <label>LCE3D</label>
    </interactant>
    <organismsDiffer>false</organismsDiffer>
    <experiments>5</experiments>
</comment>
<comment type="interaction">
    <interactant intactId="EBI-10172290">
        <id>P60409</id>
    </interactant>
    <interactant intactId="EBI-10245456">
        <id>Q5T5B0</id>
        <label>LCE3E</label>
    </interactant>
    <organismsDiffer>false</organismsDiffer>
    <experiments>8</experiments>
</comment>
<comment type="interaction">
    <interactant intactId="EBI-10172290">
        <id>P60409</id>
    </interactant>
    <interactant intactId="EBI-10246358">
        <id>Q5TA78</id>
        <label>LCE4A</label>
    </interactant>
    <organismsDiffer>false</organismsDiffer>
    <experiments>8</experiments>
</comment>
<comment type="interaction">
    <interactant intactId="EBI-10172290">
        <id>P60409</id>
    </interactant>
    <interactant intactId="EBI-11955689">
        <id>Q5TCM9</id>
        <label>LCE5A</label>
    </interactant>
    <organismsDiffer>false</organismsDiffer>
    <experiments>3</experiments>
</comment>
<comment type="interaction">
    <interactant intactId="EBI-10172290">
        <id>P60409</id>
    </interactant>
    <interactant intactId="EBI-10257651">
        <id>Q7Z4I7-5</id>
        <label>LIMS2</label>
    </interactant>
    <organismsDiffer>false</organismsDiffer>
    <experiments>3</experiments>
</comment>
<comment type="interaction">
    <interactant intactId="EBI-10172290">
        <id>P60409</id>
    </interactant>
    <interactant intactId="EBI-10245897">
        <id>Q5T6M2</id>
        <label>LINC00242</label>
    </interactant>
    <organismsDiffer>false</organismsDiffer>
    <experiments>3</experiments>
</comment>
<comment type="interaction">
    <interactant intactId="EBI-10172290">
        <id>P60409</id>
    </interactant>
    <interactant intactId="EBI-351935">
        <id>P02545</id>
        <label>LMNA</label>
    </interactant>
    <organismsDiffer>false</organismsDiffer>
    <experiments>3</experiments>
</comment>
<comment type="interaction">
    <interactant intactId="EBI-10172290">
        <id>P60409</id>
    </interactant>
    <interactant intactId="EBI-739696">
        <id>P25791</id>
        <label>LMO2</label>
    </interactant>
    <organismsDiffer>false</organismsDiffer>
    <experiments>3</experiments>
</comment>
<comment type="interaction">
    <interactant intactId="EBI-10172290">
        <id>P60409</id>
    </interactant>
    <interactant intactId="EBI-718707">
        <id>O75427</id>
        <label>LRCH4</label>
    </interactant>
    <organismsDiffer>false</organismsDiffer>
    <experiments>3</experiments>
</comment>
<comment type="interaction">
    <interactant intactId="EBI-10172290">
        <id>P60409</id>
    </interactant>
    <interactant intactId="EBI-947402">
        <id>O60336</id>
        <label>MAPKBP1</label>
    </interactant>
    <organismsDiffer>false</organismsDiffer>
    <experiments>6</experiments>
</comment>
<comment type="interaction">
    <interactant intactId="EBI-10172290">
        <id>P60409</id>
    </interactant>
    <interactant intactId="EBI-10175425">
        <id>B1AHB0</id>
        <label>MCM5</label>
    </interactant>
    <organismsDiffer>false</organismsDiffer>
    <experiments>3</experiments>
</comment>
<comment type="interaction">
    <interactant intactId="EBI-10172290">
        <id>P60409</id>
    </interactant>
    <interactant intactId="EBI-348259">
        <id>Q96EZ8</id>
        <label>MCRS1</label>
    </interactant>
    <organismsDiffer>false</organismsDiffer>
    <experiments>3</experiments>
</comment>
<comment type="interaction">
    <interactant intactId="EBI-10172290">
        <id>P60409</id>
    </interactant>
    <interactant intactId="EBI-10230628">
        <id>Q13875</id>
        <label>MOBP</label>
    </interactant>
    <organismsDiffer>false</organismsDiffer>
    <experiments>3</experiments>
</comment>
<comment type="interaction">
    <interactant intactId="EBI-10172290">
        <id>P60409</id>
    </interactant>
    <interactant intactId="EBI-12013470">
        <id>Q13875-3</id>
        <label>MOBP</label>
    </interactant>
    <organismsDiffer>false</organismsDiffer>
    <experiments>3</experiments>
</comment>
<comment type="interaction">
    <interactant intactId="EBI-10172290">
        <id>P60409</id>
    </interactant>
    <interactant intactId="EBI-399076">
        <id>Q9NV56</id>
        <label>MRGBP</label>
    </interactant>
    <organismsDiffer>false</organismsDiffer>
    <experiments>6</experiments>
</comment>
<comment type="interaction">
    <interactant intactId="EBI-10172290">
        <id>P60409</id>
    </interactant>
    <interactant intactId="EBI-741574">
        <id>Q9BW11</id>
        <label>MXD3</label>
    </interactant>
    <organismsDiffer>false</organismsDiffer>
    <experiments>3</experiments>
</comment>
<comment type="interaction">
    <interactant intactId="EBI-10172290">
        <id>P60409</id>
    </interactant>
    <interactant intactId="EBI-10211940">
        <id>P50539-3</id>
        <label>MXI1</label>
    </interactant>
    <organismsDiffer>false</organismsDiffer>
    <experiments>3</experiments>
</comment>
<comment type="interaction">
    <interactant intactId="EBI-10172290">
        <id>P60409</id>
    </interactant>
    <interactant intactId="EBI-2858213">
        <id>Q86VE0</id>
        <label>MYPOP</label>
    </interactant>
    <organismsDiffer>false</organismsDiffer>
    <experiments>3</experiments>
</comment>
<comment type="interaction">
    <interactant intactId="EBI-10172290">
        <id>P60409</id>
    </interactant>
    <interactant intactId="EBI-747693">
        <id>P41227</id>
        <label>NAA10</label>
    </interactant>
    <organismsDiffer>false</organismsDiffer>
    <experiments>3</experiments>
</comment>
<comment type="interaction">
    <interactant intactId="EBI-10172290">
        <id>P60409</id>
    </interactant>
    <interactant intactId="EBI-8650724">
        <id>Q8IW45</id>
        <label>NAXD</label>
    </interactant>
    <organismsDiffer>false</organismsDiffer>
    <experiments>6</experiments>
</comment>
<comment type="interaction">
    <interactant intactId="EBI-10172290">
        <id>P60409</id>
    </interactant>
    <interactant intactId="EBI-718419">
        <id>Q92692</id>
        <label>NECTIN2</label>
    </interactant>
    <organismsDiffer>false</organismsDiffer>
    <experiments>3</experiments>
</comment>
<comment type="interaction">
    <interactant intactId="EBI-10172290">
        <id>P60409</id>
    </interactant>
    <interactant intactId="EBI-2826725">
        <id>Q9NQS3</id>
        <label>NECTIN3</label>
    </interactant>
    <organismsDiffer>false</organismsDiffer>
    <experiments>3</experiments>
</comment>
<comment type="interaction">
    <interactant intactId="EBI-10172290">
        <id>P60409</id>
    </interactant>
    <interactant intactId="EBI-1538217">
        <id>Q969G9</id>
        <label>NKD1</label>
    </interactant>
    <organismsDiffer>false</organismsDiffer>
    <experiments>5</experiments>
</comment>
<comment type="interaction">
    <interactant intactId="EBI-10172290">
        <id>P60409</id>
    </interactant>
    <interactant intactId="EBI-716098">
        <id>Q9UGY1</id>
        <label>NOL12</label>
    </interactant>
    <organismsDiffer>false</organismsDiffer>
    <experiments>3</experiments>
</comment>
<comment type="interaction">
    <interactant intactId="EBI-10172290">
        <id>P60409</id>
    </interactant>
    <interactant intactId="EBI-945833">
        <id>Q7Z3S9</id>
        <label>NOTCH2NLA</label>
    </interactant>
    <organismsDiffer>false</organismsDiffer>
    <experiments>3</experiments>
</comment>
<comment type="interaction">
    <interactant intactId="EBI-10172290">
        <id>P60409</id>
    </interactant>
    <interactant intactId="EBI-10210114">
        <id>P48146</id>
        <label>NPBWR2</label>
    </interactant>
    <organismsDiffer>false</organismsDiffer>
    <experiments>3</experiments>
</comment>
<comment type="interaction">
    <interactant intactId="EBI-10172290">
        <id>P60409</id>
    </interactant>
    <interactant intactId="EBI-748927">
        <id>Q9NQX5</id>
        <label>NPDC1</label>
    </interactant>
    <organismsDiffer>false</organismsDiffer>
    <experiments>6</experiments>
</comment>
<comment type="interaction">
    <interactant intactId="EBI-10172290">
        <id>P60409</id>
    </interactant>
    <interactant intactId="EBI-741158">
        <id>Q96HA8</id>
        <label>NTAQ1</label>
    </interactant>
    <organismsDiffer>false</organismsDiffer>
    <experiments>3</experiments>
</comment>
<comment type="interaction">
    <interactant intactId="EBI-10172290">
        <id>P60409</id>
    </interactant>
    <interactant intactId="EBI-1048886">
        <id>Q9Y5Y2</id>
        <label>NUBP2</label>
    </interactant>
    <organismsDiffer>false</organismsDiffer>
    <experiments>3</experiments>
</comment>
<comment type="interaction">
    <interactant intactId="EBI-10172290">
        <id>P60409</id>
    </interactant>
    <interactant intactId="EBI-1210753">
        <id>Q7Z417</id>
        <label>NUFIP2</label>
    </interactant>
    <organismsDiffer>false</organismsDiffer>
    <experiments>6</experiments>
</comment>
<comment type="interaction">
    <interactant intactId="EBI-10172290">
        <id>P60409</id>
    </interactant>
    <interactant intactId="EBI-740446">
        <id>P32242</id>
        <label>OTX1</label>
    </interactant>
    <organismsDiffer>false</organismsDiffer>
    <experiments>5</experiments>
</comment>
<comment type="interaction">
    <interactant intactId="EBI-10172290">
        <id>P60409</id>
    </interactant>
    <interactant intactId="EBI-10235794">
        <id>Q15077</id>
        <label>P2RY6</label>
    </interactant>
    <organismsDiffer>false</organismsDiffer>
    <experiments>3</experiments>
</comment>
<comment type="interaction">
    <interactant intactId="EBI-10172290">
        <id>P60409</id>
    </interactant>
    <interactant intactId="EBI-748452">
        <id>Q9H1Q7</id>
        <label>PCED1A</label>
    </interactant>
    <organismsDiffer>false</organismsDiffer>
    <experiments>3</experiments>
</comment>
<comment type="interaction">
    <interactant intactId="EBI-10172290">
        <id>P60409</id>
    </interactant>
    <interactant intactId="EBI-751290">
        <id>Q92824</id>
        <label>PCSK5</label>
    </interactant>
    <organismsDiffer>false</organismsDiffer>
    <experiments>3</experiments>
</comment>
<comment type="interaction">
    <interactant intactId="EBI-10172290">
        <id>P60409</id>
    </interactant>
    <interactant intactId="EBI-11524542">
        <id>O76083-2</id>
        <label>PDE9A</label>
    </interactant>
    <organismsDiffer>false</organismsDiffer>
    <experiments>3</experiments>
</comment>
<comment type="interaction">
    <interactant intactId="EBI-10172290">
        <id>P60409</id>
    </interactant>
    <interactant intactId="EBI-953879">
        <id>Q14554</id>
        <label>PDIA5</label>
    </interactant>
    <organismsDiffer>false</organismsDiffer>
    <experiments>3</experiments>
</comment>
<comment type="interaction">
    <interactant intactId="EBI-10172290">
        <id>P60409</id>
    </interactant>
    <interactant intactId="EBI-751267">
        <id>Q96HC4</id>
        <label>PDLIM5</label>
    </interactant>
    <organismsDiffer>false</organismsDiffer>
    <experiments>3</experiments>
</comment>
<comment type="interaction">
    <interactant intactId="EBI-10172290">
        <id>P60409</id>
    </interactant>
    <interactant intactId="EBI-487243">
        <id>P17858</id>
        <label>PFKL</label>
    </interactant>
    <organismsDiffer>false</organismsDiffer>
    <experiments>3</experiments>
</comment>
<comment type="interaction">
    <interactant intactId="EBI-10172290">
        <id>P60409</id>
    </interactant>
    <interactant intactId="EBI-10310808">
        <id>Q9HCN3</id>
        <label>PGAP6</label>
    </interactant>
    <organismsDiffer>false</organismsDiffer>
    <experiments>3</experiments>
</comment>
<comment type="interaction">
    <interactant intactId="EBI-10172290">
        <id>P60409</id>
    </interactant>
    <interactant intactId="EBI-14084211">
        <id>A2BDE7</id>
        <label>PHLDA1</label>
    </interactant>
    <organismsDiffer>false</organismsDiffer>
    <experiments>3</experiments>
</comment>
<comment type="interaction">
    <interactant intactId="EBI-10172290">
        <id>P60409</id>
    </interactant>
    <interactant intactId="EBI-714158">
        <id>Q13526</id>
        <label>PIN1</label>
    </interactant>
    <organismsDiffer>false</organismsDiffer>
    <experiments>6</experiments>
</comment>
<comment type="interaction">
    <interactant intactId="EBI-10172290">
        <id>P60409</id>
    </interactant>
    <interactant intactId="EBI-10320765">
        <id>Q9UGP5-2</id>
        <label>POLL</label>
    </interactant>
    <organismsDiffer>false</organismsDiffer>
    <experiments>3</experiments>
</comment>
<comment type="interaction">
    <interactant intactId="EBI-10172290">
        <id>P60409</id>
    </interactant>
    <interactant intactId="EBI-10223258">
        <id>Q03181-2</id>
        <label>PPARD</label>
    </interactant>
    <organismsDiffer>false</organismsDiffer>
    <experiments>3</experiments>
</comment>
<comment type="interaction">
    <interactant intactId="EBI-10172290">
        <id>P60409</id>
    </interactant>
    <interactant intactId="EBI-1053424">
        <id>O43741</id>
        <label>PRKAB2</label>
    </interactant>
    <organismsDiffer>false</organismsDiffer>
    <experiments>8</experiments>
</comment>
<comment type="interaction">
    <interactant intactId="EBI-10172290">
        <id>P60409</id>
    </interactant>
    <interactant intactId="EBI-9681663">
        <id>P04554</id>
        <label>PRM2</label>
    </interactant>
    <organismsDiffer>false</organismsDiffer>
    <experiments>3</experiments>
</comment>
<comment type="interaction">
    <interactant intactId="EBI-10172290">
        <id>P60409</id>
    </interactant>
    <interactant intactId="EBI-10239098">
        <id>Q1LZN1</id>
        <label>PRM2</label>
    </interactant>
    <organismsDiffer>false</organismsDiffer>
    <experiments>3</experiments>
</comment>
<comment type="interaction">
    <interactant intactId="EBI-10172290">
        <id>P60409</id>
    </interactant>
    <interactant intactId="EBI-740924">
        <id>Q9NZ81</id>
        <label>PRR13</label>
    </interactant>
    <organismsDiffer>false</organismsDiffer>
    <experiments>3</experiments>
</comment>
<comment type="interaction">
    <interactant intactId="EBI-10172290">
        <id>P60409</id>
    </interactant>
    <interactant intactId="EBI-11986293">
        <id>P0CG20</id>
        <label>PRR35</label>
    </interactant>
    <organismsDiffer>false</organismsDiffer>
    <experiments>3</experiments>
</comment>
<comment type="interaction">
    <interactant intactId="EBI-10172290">
        <id>P60409</id>
    </interactant>
    <interactant intactId="EBI-948821">
        <id>P41222</id>
        <label>PTGDS</label>
    </interactant>
    <organismsDiffer>false</organismsDiffer>
    <experiments>3</experiments>
</comment>
<comment type="interaction">
    <interactant intactId="EBI-10172290">
        <id>P60409</id>
    </interactant>
    <interactant intactId="EBI-10234038">
        <id>P43115-12</id>
        <label>PTGER3</label>
    </interactant>
    <organismsDiffer>false</organismsDiffer>
    <experiments>3</experiments>
</comment>
<comment type="interaction">
    <interactant intactId="EBI-10172290">
        <id>P60409</id>
    </interactant>
    <interactant intactId="EBI-7199479">
        <id>Q8WUK0</id>
        <label>PTPMT1</label>
    </interactant>
    <organismsDiffer>false</organismsDiffer>
    <experiments>6</experiments>
</comment>
<comment type="interaction">
    <interactant intactId="EBI-10172290">
        <id>P60409</id>
    </interactant>
    <interactant intactId="EBI-3919694">
        <id>P15151</id>
        <label>PVR</label>
    </interactant>
    <organismsDiffer>false</organismsDiffer>
    <experiments>3</experiments>
</comment>
<comment type="interaction">
    <interactant intactId="EBI-10172290">
        <id>P60409</id>
    </interactant>
    <interactant intactId="EBI-948428">
        <id>Q9Y2K5</id>
        <label>R3HDM2</label>
    </interactant>
    <organismsDiffer>false</organismsDiffer>
    <experiments>3</experiments>
</comment>
<comment type="interaction">
    <interactant intactId="EBI-10172290">
        <id>P60409</id>
    </interactant>
    <interactant intactId="EBI-10265447">
        <id>Q8N4F7</id>
        <label>RNF175</label>
    </interactant>
    <organismsDiffer>false</organismsDiffer>
    <experiments>3</experiments>
</comment>
<comment type="interaction">
    <interactant intactId="EBI-10172290">
        <id>P60409</id>
    </interactant>
    <interactant intactId="EBI-9996007">
        <id>Q9H9Y2</id>
        <label>RPF1</label>
    </interactant>
    <organismsDiffer>false</organismsDiffer>
    <experiments>4</experiments>
</comment>
<comment type="interaction">
    <interactant intactId="EBI-10172290">
        <id>P60409</id>
    </interactant>
    <interactant intactId="EBI-354380">
        <id>P62913</id>
        <label>RPL11</label>
    </interactant>
    <organismsDiffer>false</organismsDiffer>
    <experiments>3</experiments>
</comment>
<comment type="interaction">
    <interactant intactId="EBI-10172290">
        <id>P60409</id>
    </interactant>
    <interactant intactId="EBI-2877705">
        <id>Q969Q0</id>
        <label>RPL36AL</label>
    </interactant>
    <organismsDiffer>false</organismsDiffer>
    <experiments>3</experiments>
</comment>
<comment type="interaction">
    <interactant intactId="EBI-10172290">
        <id>P60409</id>
    </interactant>
    <interactant intactId="EBI-353027">
        <id>P62857</id>
        <label>RPS28</label>
    </interactant>
    <organismsDiffer>false</organismsDiffer>
    <experiments>3</experiments>
</comment>
<comment type="interaction">
    <interactant intactId="EBI-10172290">
        <id>P60409</id>
    </interactant>
    <interactant intactId="EBI-5458784">
        <id>Q6P087</id>
        <label>RPUSD3</label>
    </interactant>
    <organismsDiffer>false</organismsDiffer>
    <experiments>3</experiments>
</comment>
<comment type="interaction">
    <interactant intactId="EBI-10172290">
        <id>P60409</id>
    </interactant>
    <interactant intactId="EBI-8481036">
        <id>Q6UXX9</id>
        <label>RSPO2</label>
    </interactant>
    <organismsDiffer>false</organismsDiffer>
    <experiments>3</experiments>
</comment>
<comment type="interaction">
    <interactant intactId="EBI-10172290">
        <id>P60409</id>
    </interactant>
    <interactant intactId="EBI-12009390">
        <id>Q6UXX9-2</id>
        <label>RSPO2</label>
    </interactant>
    <organismsDiffer>false</organismsDiffer>
    <experiments>3</experiments>
</comment>
<comment type="interaction">
    <interactant intactId="EBI-10172290">
        <id>P60409</id>
    </interactant>
    <interactant intactId="EBI-10258951">
        <id>Q86UN2</id>
        <label>RTN4RL1</label>
    </interactant>
    <organismsDiffer>false</organismsDiffer>
    <experiments>3</experiments>
</comment>
<comment type="interaction">
    <interactant intactId="EBI-10172290">
        <id>P60409</id>
    </interactant>
    <interactant intactId="EBI-724442">
        <id>P57060</id>
        <label>RWDD2B</label>
    </interactant>
    <organismsDiffer>false</organismsDiffer>
    <experiments>3</experiments>
</comment>
<comment type="interaction">
    <interactant intactId="EBI-10172290">
        <id>P60409</id>
    </interactant>
    <interactant intactId="EBI-748391">
        <id>Q9BWG6</id>
        <label>SCNM1</label>
    </interactant>
    <organismsDiffer>false</organismsDiffer>
    <experiments>3</experiments>
</comment>
<comment type="interaction">
    <interactant intactId="EBI-10172290">
        <id>P60409</id>
    </interactant>
    <interactant intactId="EBI-727004">
        <id>O00560</id>
        <label>SDCBP</label>
    </interactant>
    <organismsDiffer>false</organismsDiffer>
    <experiments>3</experiments>
</comment>
<comment type="interaction">
    <interactant intactId="EBI-10172290">
        <id>P60409</id>
    </interactant>
    <interactant intactId="EBI-10313866">
        <id>Q9NUL5</id>
        <label>SHFL</label>
    </interactant>
    <organismsDiffer>false</organismsDiffer>
    <experiments>3</experiments>
</comment>
<comment type="interaction">
    <interactant intactId="EBI-10172290">
        <id>P60409</id>
    </interactant>
    <interactant intactId="EBI-11955083">
        <id>Q9NUL5-4</id>
        <label>SHFL</label>
    </interactant>
    <organismsDiffer>false</organismsDiffer>
    <experiments>3</experiments>
</comment>
<comment type="interaction">
    <interactant intactId="EBI-10172290">
        <id>P60409</id>
    </interactant>
    <interactant intactId="EBI-1759386">
        <id>Q9UHI7</id>
        <label>SLC23A1</label>
    </interactant>
    <organismsDiffer>false</organismsDiffer>
    <experiments>3</experiments>
</comment>
<comment type="interaction">
    <interactant intactId="EBI-10172290">
        <id>P60409</id>
    </interactant>
    <interactant intactId="EBI-10255185">
        <id>Q6ZT89</id>
        <label>SLC25A48</label>
    </interactant>
    <organismsDiffer>false</organismsDiffer>
    <experiments>3</experiments>
</comment>
<comment type="interaction">
    <interactant intactId="EBI-10172290">
        <id>P60409</id>
    </interactant>
    <interactant intactId="EBI-10311198">
        <id>Q9NP91</id>
        <label>SLC6A20</label>
    </interactant>
    <organismsDiffer>false</organismsDiffer>
    <experiments>3</experiments>
</comment>
<comment type="interaction">
    <interactant intactId="EBI-10172290">
        <id>P60409</id>
    </interactant>
    <interactant intactId="EBI-8640191">
        <id>Q9NRQ5</id>
        <label>SMCO4</label>
    </interactant>
    <organismsDiffer>false</organismsDiffer>
    <experiments>3</experiments>
</comment>
<comment type="interaction">
    <interactant intactId="EBI-10172290">
        <id>P60409</id>
    </interactant>
    <interactant intactId="EBI-750494">
        <id>P49901</id>
        <label>SMCP</label>
    </interactant>
    <organismsDiffer>false</organismsDiffer>
    <experiments>6</experiments>
</comment>
<comment type="interaction">
    <interactant intactId="EBI-10172290">
        <id>P60409</id>
    </interactant>
    <interactant intactId="EBI-722584">
        <id>Q96E40</id>
        <label>SPACA9</label>
    </interactant>
    <organismsDiffer>false</organismsDiffer>
    <experiments>3</experiments>
</comment>
<comment type="interaction">
    <interactant intactId="EBI-10172290">
        <id>P60409</id>
    </interactant>
    <interactant intactId="EBI-12041693">
        <id>Q86W54-2</id>
        <label>SPATA24</label>
    </interactant>
    <organismsDiffer>false</organismsDiffer>
    <experiments>3</experiments>
</comment>
<comment type="interaction">
    <interactant intactId="EBI-10172290">
        <id>P60409</id>
    </interactant>
    <interactant intactId="EBI-8635958">
        <id>Q6RVD6</id>
        <label>SPATA8</label>
    </interactant>
    <organismsDiffer>false</organismsDiffer>
    <experiments>3</experiments>
</comment>
<comment type="interaction">
    <interactant intactId="EBI-10172290">
        <id>P60409</id>
    </interactant>
    <interactant intactId="EBI-717201">
        <id>Q9UQ90</id>
        <label>SPG7</label>
    </interactant>
    <organismsDiffer>false</organismsDiffer>
    <experiments>3</experiments>
</comment>
<comment type="interaction">
    <interactant intactId="EBI-10172290">
        <id>P60409</id>
    </interactant>
    <interactant intactId="EBI-5235340">
        <id>Q7Z699</id>
        <label>SPRED1</label>
    </interactant>
    <organismsDiffer>false</organismsDiffer>
    <experiments>3</experiments>
</comment>
<comment type="interaction">
    <interactant intactId="EBI-10172290">
        <id>P60409</id>
    </interactant>
    <interactant intactId="EBI-3866665">
        <id>O43609</id>
        <label>SPRY1</label>
    </interactant>
    <organismsDiffer>false</organismsDiffer>
    <experiments>6</experiments>
</comment>
<comment type="interaction">
    <interactant intactId="EBI-10172290">
        <id>P60409</id>
    </interactant>
    <interactant intactId="EBI-2212028">
        <id>Q9Y2D8</id>
        <label>SSX2IP</label>
    </interactant>
    <organismsDiffer>false</organismsDiffer>
    <experiments>3</experiments>
</comment>
<comment type="interaction">
    <interactant intactId="EBI-10172290">
        <id>P60409</id>
    </interactant>
    <interactant intactId="EBI-749295">
        <id>O75716</id>
        <label>STK16</label>
    </interactant>
    <organismsDiffer>false</organismsDiffer>
    <experiments>3</experiments>
</comment>
<comment type="interaction">
    <interactant intactId="EBI-10172290">
        <id>P60409</id>
    </interactant>
    <interactant intactId="EBI-349968">
        <id>O43463</id>
        <label>SUV39H1</label>
    </interactant>
    <organismsDiffer>false</organismsDiffer>
    <experiments>6</experiments>
</comment>
<comment type="interaction">
    <interactant intactId="EBI-10172290">
        <id>P60409</id>
    </interactant>
    <interactant intactId="EBI-710310">
        <id>Q15560</id>
        <label>TCEA2</label>
    </interactant>
    <organismsDiffer>false</organismsDiffer>
    <experiments>3</experiments>
</comment>
<comment type="interaction">
    <interactant intactId="EBI-10172290">
        <id>P60409</id>
    </interactant>
    <interactant intactId="EBI-954696">
        <id>Q8N8B7</id>
        <label>TCEANC</label>
    </interactant>
    <organismsDiffer>false</organismsDiffer>
    <experiments>3</experiments>
</comment>
<comment type="interaction">
    <interactant intactId="EBI-10172290">
        <id>P60409</id>
    </interactant>
    <interactant intactId="EBI-8465456">
        <id>Q7L2K0</id>
        <label>TEDC2</label>
    </interactant>
    <organismsDiffer>false</organismsDiffer>
    <experiments>3</experiments>
</comment>
<comment type="interaction">
    <interactant intactId="EBI-10172290">
        <id>P60409</id>
    </interactant>
    <interactant intactId="EBI-11952651">
        <id>Q7Z6R9</id>
        <label>TFAP2D</label>
    </interactant>
    <organismsDiffer>false</organismsDiffer>
    <experiments>5</experiments>
</comment>
<comment type="interaction">
    <interactant intactId="EBI-10172290">
        <id>P60409</id>
    </interactant>
    <interactant intactId="EBI-741515">
        <id>Q9NVV9</id>
        <label>THAP1</label>
    </interactant>
    <organismsDiffer>false</organismsDiffer>
    <experiments>3</experiments>
</comment>
<comment type="interaction">
    <interactant intactId="EBI-10172290">
        <id>P60409</id>
    </interactant>
    <interactant intactId="EBI-3925505">
        <id>Q8TBB0</id>
        <label>THAP6</label>
    </interactant>
    <organismsDiffer>false</organismsDiffer>
    <experiments>3</experiments>
</comment>
<comment type="interaction">
    <interactant intactId="EBI-10172290">
        <id>P60409</id>
    </interactant>
    <interactant intactId="EBI-717810">
        <id>Q08117</id>
        <label>TLE5</label>
    </interactant>
    <organismsDiffer>false</organismsDiffer>
    <experiments>3</experiments>
</comment>
<comment type="interaction">
    <interactant intactId="EBI-10172290">
        <id>P60409</id>
    </interactant>
    <interactant intactId="EBI-11741437">
        <id>Q08117-2</id>
        <label>TLE5</label>
    </interactant>
    <organismsDiffer>false</organismsDiffer>
    <experiments>3</experiments>
</comment>
<comment type="interaction">
    <interactant intactId="EBI-10172290">
        <id>P60409</id>
    </interactant>
    <interactant intactId="EBI-1045338">
        <id>Q96EY4</id>
        <label>TMA16</label>
    </interactant>
    <organismsDiffer>false</organismsDiffer>
    <experiments>3</experiments>
</comment>
<comment type="interaction">
    <interactant intactId="EBI-10172290">
        <id>P60409</id>
    </interactant>
    <interactant intactId="EBI-10241829">
        <id>Q4VB56</id>
        <label>TNP2</label>
    </interactant>
    <organismsDiffer>false</organismsDiffer>
    <experiments>3</experiments>
</comment>
<comment type="interaction">
    <interactant intactId="EBI-10172290">
        <id>P60409</id>
    </interactant>
    <interactant intactId="EBI-949753">
        <id>Q63HR2</id>
        <label>TNS2</label>
    </interactant>
    <organismsDiffer>false</organismsDiffer>
    <experiments>3</experiments>
</comment>
<comment type="interaction">
    <interactant intactId="EBI-10172290">
        <id>P60409</id>
    </interactant>
    <interactant intactId="EBI-524257">
        <id>O14656</id>
        <label>TOR1A</label>
    </interactant>
    <organismsDiffer>false</organismsDiffer>
    <experiments>6</experiments>
</comment>
<comment type="interaction">
    <interactant intactId="EBI-10172290">
        <id>P60409</id>
    </interactant>
    <interactant intactId="EBI-16746122">
        <id>Q9NSU2-1</id>
        <label>TREX1</label>
    </interactant>
    <organismsDiffer>false</organismsDiffer>
    <experiments>6</experiments>
</comment>
<comment type="interaction">
    <interactant intactId="EBI-10172290">
        <id>P60409</id>
    </interactant>
    <interactant intactId="EBI-5235829">
        <id>Q8IWZ5</id>
        <label>TRIM42</label>
    </interactant>
    <organismsDiffer>false</organismsDiffer>
    <experiments>3</experiments>
</comment>
<comment type="interaction">
    <interactant intactId="EBI-10172290">
        <id>P60409</id>
    </interactant>
    <interactant intactId="EBI-10210710">
        <id>P49638</id>
        <label>TTPA</label>
    </interactant>
    <organismsDiffer>false</organismsDiffer>
    <experiments>3</experiments>
</comment>
<comment type="interaction">
    <interactant intactId="EBI-10172290">
        <id>P60409</id>
    </interactant>
    <interactant intactId="EBI-5357290">
        <id>O75386</id>
        <label>TULP3</label>
    </interactant>
    <organismsDiffer>false</organismsDiffer>
    <experiments>3</experiments>
</comment>
<comment type="interaction">
    <interactant intactId="EBI-10172290">
        <id>P60409</id>
    </interactant>
    <interactant intactId="EBI-2825190">
        <id>Q86UY0</id>
        <label>TXNDC5</label>
    </interactant>
    <organismsDiffer>false</organismsDiffer>
    <experiments>3</experiments>
</comment>
<comment type="interaction">
    <interactant intactId="EBI-10172290">
        <id>P60409</id>
    </interactant>
    <interactant intactId="EBI-3951628">
        <id>Q06418</id>
        <label>TYRO3</label>
    </interactant>
    <organismsDiffer>false</organismsDiffer>
    <experiments>3</experiments>
</comment>
<comment type="interaction">
    <interactant intactId="EBI-10172290">
        <id>P60409</id>
    </interactant>
    <interactant intactId="EBI-2842077">
        <id>P55851</id>
        <label>UCP2</label>
    </interactant>
    <organismsDiffer>false</organismsDiffer>
    <experiments>3</experiments>
</comment>
<comment type="interaction">
    <interactant intactId="EBI-10172290">
        <id>P60409</id>
    </interactant>
    <interactant intactId="EBI-357355">
        <id>Q9UBK9</id>
        <label>UXT</label>
    </interactant>
    <organismsDiffer>false</organismsDiffer>
    <experiments>3</experiments>
</comment>
<comment type="interaction">
    <interactant intactId="EBI-10172290">
        <id>P60409</id>
    </interactant>
    <interactant intactId="EBI-10249550">
        <id>Q6EMK4</id>
        <label>VASN</label>
    </interactant>
    <organismsDiffer>false</organismsDiffer>
    <experiments>3</experiments>
</comment>
<comment type="interaction">
    <interactant intactId="EBI-10172290">
        <id>P60409</id>
    </interactant>
    <interactant intactId="EBI-11957216">
        <id>A8MV65-2</id>
        <label>VGLL3</label>
    </interactant>
    <organismsDiffer>false</organismsDiffer>
    <experiments>3</experiments>
</comment>
<comment type="interaction">
    <interactant intactId="EBI-10172290">
        <id>P60409</id>
    </interactant>
    <interactant intactId="EBI-723716">
        <id>Q9UEU0</id>
        <label>VTI1B</label>
    </interactant>
    <organismsDiffer>false</organismsDiffer>
    <experiments>3</experiments>
</comment>
<comment type="interaction">
    <interactant intactId="EBI-10172290">
        <id>P60409</id>
    </interactant>
    <interactant intactId="EBI-8058160">
        <id>O96014</id>
        <label>WNT11</label>
    </interactant>
    <organismsDiffer>false</organismsDiffer>
    <experiments>3</experiments>
</comment>
<comment type="interaction">
    <interactant intactId="EBI-10172290">
        <id>P60409</id>
    </interactant>
    <interactant intactId="EBI-11745701">
        <id>P19544-6</id>
        <label>WT1</label>
    </interactant>
    <organismsDiffer>false</organismsDiffer>
    <experiments>3</experiments>
</comment>
<comment type="interaction">
    <interactant intactId="EBI-10172290">
        <id>P60409</id>
    </interactant>
    <interactant intactId="EBI-744471">
        <id>O43167</id>
        <label>ZBTB24</label>
    </interactant>
    <organismsDiffer>false</organismsDiffer>
    <experiments>3</experiments>
</comment>
<comment type="interaction">
    <interactant intactId="EBI-10172290">
        <id>P60409</id>
    </interactant>
    <interactant intactId="EBI-744864">
        <id>P10074</id>
        <label>ZBTB48</label>
    </interactant>
    <organismsDiffer>false</organismsDiffer>
    <experiments>3</experiments>
</comment>
<comment type="interaction">
    <interactant intactId="EBI-10172290">
        <id>P60409</id>
    </interactant>
    <interactant intactId="EBI-395708">
        <id>Q96C00</id>
        <label>ZBTB9</label>
    </interactant>
    <organismsDiffer>false</organismsDiffer>
    <experiments>7</experiments>
</comment>
<comment type="interaction">
    <interactant intactId="EBI-10172290">
        <id>P60409</id>
    </interactant>
    <interactant intactId="EBI-12224489">
        <id>Q8N8Y5</id>
        <label>ZFP41</label>
    </interactant>
    <organismsDiffer>false</organismsDiffer>
    <experiments>3</experiments>
</comment>
<comment type="interaction">
    <interactant intactId="EBI-10172290">
        <id>P60409</id>
    </interactant>
    <interactant intactId="EBI-8656416">
        <id>Q68DK2-5</id>
        <label>ZFYVE26</label>
    </interactant>
    <organismsDiffer>false</organismsDiffer>
    <experiments>6</experiments>
</comment>
<comment type="interaction">
    <interactant intactId="EBI-10172290">
        <id>P60409</id>
    </interactant>
    <interactant intactId="EBI-11962760">
        <id>Q9NZV7</id>
        <label>ZIM2</label>
    </interactant>
    <organismsDiffer>false</organismsDiffer>
    <experiments>3</experiments>
</comment>
<comment type="interaction">
    <interactant intactId="EBI-10172290">
        <id>P60409</id>
    </interactant>
    <interactant intactId="EBI-5278328">
        <id>Q8IZC7</id>
        <label>ZNF101</label>
    </interactant>
    <organismsDiffer>false</organismsDiffer>
    <experiments>6</experiments>
</comment>
<comment type="interaction">
    <interactant intactId="EBI-10172290">
        <id>P60409</id>
    </interactant>
    <interactant intactId="EBI-2555767">
        <id>Q15973</id>
        <label>ZNF124</label>
    </interactant>
    <organismsDiffer>false</organismsDiffer>
    <experiments>3</experiments>
</comment>
<comment type="interaction">
    <interactant intactId="EBI-10172290">
        <id>P60409</id>
    </interactant>
    <interactant intactId="EBI-2687350">
        <id>P52736</id>
        <label>ZNF133</label>
    </interactant>
    <organismsDiffer>false</organismsDiffer>
    <experiments>3</experiments>
</comment>
<comment type="interaction">
    <interactant intactId="EBI-10172290">
        <id>P60409</id>
    </interactant>
    <interactant intactId="EBI-10746567">
        <id>P52744</id>
        <label>ZNF138</label>
    </interactant>
    <organismsDiffer>false</organismsDiffer>
    <experiments>3</experiments>
</comment>
<comment type="interaction">
    <interactant intactId="EBI-10172290">
        <id>P60409</id>
    </interactant>
    <interactant intactId="EBI-10227379">
        <id>Q12901-2</id>
        <label>ZNF155</label>
    </interactant>
    <organismsDiffer>false</organismsDiffer>
    <experiments>3</experiments>
</comment>
<comment type="interaction">
    <interactant intactId="EBI-10172290">
        <id>P60409</id>
    </interactant>
    <interactant intactId="EBI-10186058">
        <id>Q53Z40</id>
        <label>ZNF165</label>
    </interactant>
    <organismsDiffer>false</organismsDiffer>
    <experiments>3</experiments>
</comment>
<comment type="interaction">
    <interactant intactId="EBI-10172290">
        <id>P60409</id>
    </interactant>
    <interactant intactId="EBI-10234472">
        <id>Q14929</id>
        <label>ZNF169</label>
    </interactant>
    <organismsDiffer>false</organismsDiffer>
    <experiments>3</experiments>
</comment>
<comment type="interaction">
    <interactant intactId="EBI-10172290">
        <id>P60409</id>
    </interactant>
    <interactant intactId="EBI-3438881">
        <id>Q9Y473</id>
        <label>ZNF175</label>
    </interactant>
    <organismsDiffer>false</organismsDiffer>
    <experiments>3</experiments>
</comment>
<comment type="interaction">
    <interactant intactId="EBI-10172290">
        <id>P60409</id>
    </interactant>
    <interactant intactId="EBI-10322527">
        <id>Q9UJW8</id>
        <label>ZNF180</label>
    </interactant>
    <organismsDiffer>false</organismsDiffer>
    <experiments>3</experiments>
</comment>
<comment type="interaction">
    <interactant intactId="EBI-10172290">
        <id>P60409</id>
    </interactant>
    <interactant intactId="EBI-10297542">
        <id>Q9BSG1-2</id>
        <label>ZNF2</label>
    </interactant>
    <organismsDiffer>false</organismsDiffer>
    <experiments>3</experiments>
</comment>
<comment type="interaction">
    <interactant intactId="EBI-10172290">
        <id>P60409</id>
    </interactant>
    <interactant intactId="EBI-717634">
        <id>P17024</id>
        <label>ZNF20</label>
    </interactant>
    <organismsDiffer>false</organismsDiffer>
    <experiments>3</experiments>
</comment>
<comment type="interaction">
    <interactant intactId="EBI-10172290">
        <id>P60409</id>
    </interactant>
    <interactant intactId="EBI-10322867">
        <id>Q9UK11</id>
        <label>ZNF223</label>
    </interactant>
    <organismsDiffer>false</organismsDiffer>
    <experiments>4</experiments>
</comment>
<comment type="interaction">
    <interactant intactId="EBI-10172290">
        <id>P60409</id>
    </interactant>
    <interactant intactId="EBI-10177272">
        <id>P15622-3</id>
        <label>ZNF250</label>
    </interactant>
    <organismsDiffer>false</organismsDiffer>
    <experiments>3</experiments>
</comment>
<comment type="interaction">
    <interactant intactId="EBI-10172290">
        <id>P60409</id>
    </interactant>
    <interactant intactId="EBI-12223065">
        <id>Q9Y2P7</id>
        <label>ZNF256</label>
    </interactant>
    <organismsDiffer>false</organismsDiffer>
    <experiments>3</experiments>
</comment>
<comment type="interaction">
    <interactant intactId="EBI-10172290">
        <id>P60409</id>
    </interactant>
    <interactant intactId="EBI-2841331">
        <id>P17031</id>
        <label>ZNF26</label>
    </interactant>
    <organismsDiffer>false</organismsDiffer>
    <experiments>3</experiments>
</comment>
<comment type="interaction">
    <interactant intactId="EBI-10172290">
        <id>P60409</id>
    </interactant>
    <interactant intactId="EBI-10241410">
        <id>Q3ZCT1</id>
        <label>ZNF260</label>
    </interactant>
    <organismsDiffer>false</organismsDiffer>
    <experiments>3</experiments>
</comment>
<comment type="interaction">
    <interactant intactId="EBI-10172290">
        <id>P60409</id>
    </interactant>
    <interactant intactId="EBI-4395808">
        <id>O43296</id>
        <label>ZNF264</label>
    </interactant>
    <organismsDiffer>false</organismsDiffer>
    <experiments>3</experiments>
</comment>
<comment type="interaction">
    <interactant intactId="EBI-10172290">
        <id>P60409</id>
    </interactant>
    <interactant intactId="EBI-7115319">
        <id>Q14584</id>
        <label>ZNF266</label>
    </interactant>
    <organismsDiffer>false</organismsDiffer>
    <experiments>5</experiments>
</comment>
<comment type="interaction">
    <interactant intactId="EBI-10172290">
        <id>P60409</id>
    </interactant>
    <interactant intactId="EBI-1965483">
        <id>P17041</id>
        <label>ZNF32</label>
    </interactant>
    <organismsDiffer>false</organismsDiffer>
    <experiments>3</experiments>
</comment>
<comment type="interaction">
    <interactant intactId="EBI-10172290">
        <id>P60409</id>
    </interactant>
    <interactant intactId="EBI-10173019">
        <id>A2RRD8</id>
        <label>ZNF320</label>
    </interactant>
    <organismsDiffer>false</organismsDiffer>
    <experiments>3</experiments>
</comment>
<comment type="interaction">
    <interactant intactId="EBI-10172290">
        <id>P60409</id>
    </interactant>
    <interactant intactId="EBI-7233259">
        <id>Q86UD4</id>
        <label>ZNF329</label>
    </interactant>
    <organismsDiffer>false</organismsDiffer>
    <experiments>3</experiments>
</comment>
<comment type="interaction">
    <interactant intactId="EBI-10172290">
        <id>P60409</id>
    </interactant>
    <interactant intactId="EBI-714987">
        <id>Q9Y3M9</id>
        <label>ZNF337</label>
    </interactant>
    <organismsDiffer>false</organismsDiffer>
    <experiments>3</experiments>
</comment>
<comment type="interaction">
    <interactant intactId="EBI-10172290">
        <id>P60409</id>
    </interactant>
    <interactant intactId="EBI-347633">
        <id>Q9H9D4</id>
        <label>ZNF408</label>
    </interactant>
    <organismsDiffer>false</organismsDiffer>
    <experiments>3</experiments>
</comment>
<comment type="interaction">
    <interactant intactId="EBI-10172290">
        <id>P60409</id>
    </interactant>
    <interactant intactId="EBI-2681830">
        <id>P51814</id>
        <label>ZNF41</label>
    </interactant>
    <organismsDiffer>false</organismsDiffer>
    <experiments>3</experiments>
</comment>
<comment type="interaction">
    <interactant intactId="EBI-10172290">
        <id>P60409</id>
    </interactant>
    <interactant intactId="EBI-744257">
        <id>Q96IQ9</id>
        <label>ZNF414</label>
    </interactant>
    <organismsDiffer>false</organismsDiffer>
    <experiments>3</experiments>
</comment>
<comment type="interaction">
    <interactant intactId="EBI-10172290">
        <id>P60409</id>
    </interactant>
    <interactant intactId="EBI-740727">
        <id>Q8TAU3</id>
        <label>ZNF417</label>
    </interactant>
    <organismsDiffer>false</organismsDiffer>
    <experiments>6</experiments>
</comment>
<comment type="interaction">
    <interactant intactId="EBI-10172290">
        <id>P60409</id>
    </interactant>
    <interactant intactId="EBI-3446851">
        <id>Q8TF45</id>
        <label>ZNF418</label>
    </interactant>
    <organismsDiffer>false</organismsDiffer>
    <experiments>3</experiments>
</comment>
<comment type="interaction">
    <interactant intactId="EBI-10172290">
        <id>P60409</id>
    </interactant>
    <interactant intactId="EBI-10288482">
        <id>Q96HQ0</id>
        <label>ZNF419</label>
    </interactant>
    <organismsDiffer>false</organismsDiffer>
    <experiments>3</experiments>
</comment>
<comment type="interaction">
    <interactant intactId="EBI-10172290">
        <id>P60409</id>
    </interactant>
    <interactant intactId="EBI-3923307">
        <id>Q8TAQ5</id>
        <label>ZNF420</label>
    </interactant>
    <organismsDiffer>false</organismsDiffer>
    <experiments>3</experiments>
</comment>
<comment type="interaction">
    <interactant intactId="EBI-10172290">
        <id>P60409</id>
    </interactant>
    <interactant intactId="EBI-10250516">
        <id>Q6IV72</id>
        <label>ZNF425</label>
    </interactant>
    <organismsDiffer>false</organismsDiffer>
    <experiments>3</experiments>
</comment>
<comment type="interaction">
    <interactant intactId="EBI-10172290">
        <id>P60409</id>
    </interactant>
    <interactant intactId="EBI-10267553">
        <id>Q8N7K0</id>
        <label>ZNF433</label>
    </interactant>
    <organismsDiffer>false</organismsDiffer>
    <experiments>3</experiments>
</comment>
<comment type="interaction">
    <interactant intactId="EBI-10172290">
        <id>P60409</id>
    </interactant>
    <interactant intactId="EBI-747580">
        <id>Q8NDP4</id>
        <label>ZNF439</label>
    </interactant>
    <organismsDiffer>false</organismsDiffer>
    <experiments>3</experiments>
</comment>
<comment type="interaction">
    <interactant intactId="EBI-10172290">
        <id>P60409</id>
    </interactant>
    <interactant intactId="EBI-726439">
        <id>Q8IYI8</id>
        <label>ZNF440</label>
    </interactant>
    <organismsDiffer>false</organismsDiffer>
    <experiments>3</experiments>
</comment>
<comment type="interaction">
    <interactant intactId="EBI-10172290">
        <id>P60409</id>
    </interactant>
    <interactant intactId="EBI-12010736">
        <id>Q8N0Y2-2</id>
        <label>ZNF444</label>
    </interactant>
    <organismsDiffer>false</organismsDiffer>
    <experiments>3</experiments>
</comment>
<comment type="interaction">
    <interactant intactId="EBI-10172290">
        <id>P60409</id>
    </interactant>
    <interactant intactId="EBI-1105370">
        <id>Q9ULM2</id>
        <label>ZNF490</label>
    </interactant>
    <organismsDiffer>false</organismsDiffer>
    <experiments>6</experiments>
</comment>
<comment type="interaction">
    <interactant intactId="EBI-10172290">
        <id>P60409</id>
    </interactant>
    <interactant intactId="EBI-12019860">
        <id>Q8N8L2</id>
        <label>ZNF491</label>
    </interactant>
    <organismsDiffer>false</organismsDiffer>
    <experiments>5</experiments>
</comment>
<comment type="interaction">
    <interactant intactId="EBI-10172290">
        <id>P60409</id>
    </interactant>
    <interactant intactId="EBI-10283126">
        <id>Q96C55</id>
        <label>ZNF524</label>
    </interactant>
    <organismsDiffer>false</organismsDiffer>
    <experiments>3</experiments>
</comment>
<comment type="interaction">
    <interactant intactId="EBI-10172290">
        <id>P60409</id>
    </interactant>
    <interactant intactId="EBI-10226133">
        <id>Q08ER8</id>
        <label>ZNF543</label>
    </interactant>
    <organismsDiffer>false</organismsDiffer>
    <experiments>3</experiments>
</comment>
<comment type="interaction">
    <interactant intactId="EBI-10172290">
        <id>P60409</id>
    </interactant>
    <interactant intactId="EBI-10270752">
        <id>Q8NEP9</id>
        <label>ZNF555</label>
    </interactant>
    <organismsDiffer>false</organismsDiffer>
    <experiments>3</experiments>
</comment>
<comment type="interaction">
    <interactant intactId="EBI-10172290">
        <id>P60409</id>
    </interactant>
    <interactant intactId="EBI-10273713">
        <id>Q8TBZ8</id>
        <label>ZNF564</label>
    </interactant>
    <organismsDiffer>false</organismsDiffer>
    <experiments>6</experiments>
</comment>
<comment type="interaction">
    <interactant intactId="EBI-10172290">
        <id>P60409</id>
    </interactant>
    <interactant intactId="EBI-10172590">
        <id>Q7Z3I7</id>
        <label>ZNF572</label>
    </interactant>
    <organismsDiffer>false</organismsDiffer>
    <experiments>3</experiments>
</comment>
<comment type="interaction">
    <interactant intactId="EBI-10172290">
        <id>P60409</id>
    </interactant>
    <interactant intactId="EBI-14069183">
        <id>Q86XF7</id>
        <label>ZNF575</label>
    </interactant>
    <organismsDiffer>false</organismsDiffer>
    <experiments>3</experiments>
</comment>
<comment type="interaction">
    <interactant intactId="EBI-10172290">
        <id>P60409</id>
    </interactant>
    <interactant intactId="EBI-10241108">
        <id>Q3MI94</id>
        <label>ZNF578</label>
    </interactant>
    <organismsDiffer>false</organismsDiffer>
    <experiments>3</experiments>
</comment>
<comment type="interaction">
    <interactant intactId="EBI-10172290">
        <id>P60409</id>
    </interactant>
    <interactant intactId="EBI-11955189">
        <id>Q96N58</id>
        <label>ZNF578</label>
    </interactant>
    <organismsDiffer>false</organismsDiffer>
    <experiments>3</experiments>
</comment>
<comment type="interaction">
    <interactant intactId="EBI-10172290">
        <id>P60409</id>
    </interactant>
    <interactant intactId="EBI-746277">
        <id>Q9UK33</id>
        <label>ZNF580</label>
    </interactant>
    <organismsDiffer>false</organismsDiffer>
    <experiments>3</experiments>
</comment>
<comment type="interaction">
    <interactant intactId="EBI-10172290">
        <id>P60409</id>
    </interactant>
    <interactant intactId="EBI-745520">
        <id>Q9P0T4</id>
        <label>ZNF581</label>
    </interactant>
    <organismsDiffer>false</organismsDiffer>
    <experiments>6</experiments>
</comment>
<comment type="interaction">
    <interactant intactId="EBI-10172290">
        <id>P60409</id>
    </interactant>
    <interactant intactId="EBI-6427977">
        <id>Q96SQ5</id>
        <label>ZNF587</label>
    </interactant>
    <organismsDiffer>false</organismsDiffer>
    <experiments>6</experiments>
</comment>
<comment type="interaction">
    <interactant intactId="EBI-10172290">
        <id>P60409</id>
    </interactant>
    <interactant intactId="EBI-4395587">
        <id>Q96I27</id>
        <label>ZNF625</label>
    </interactant>
    <organismsDiffer>false</organismsDiffer>
    <experiments>3</experiments>
</comment>
<comment type="interaction">
    <interactant intactId="EBI-10172290">
        <id>P60409</id>
    </interactant>
    <interactant intactId="EBI-7115499">
        <id>Q5HYK9</id>
        <label>ZNF667</label>
    </interactant>
    <organismsDiffer>false</organismsDiffer>
    <experiments>3</experiments>
</comment>
<comment type="interaction">
    <interactant intactId="EBI-10172290">
        <id>P60409</id>
    </interactant>
    <interactant intactId="EBI-745276">
        <id>Q9BS34</id>
        <label>ZNF670</label>
    </interactant>
    <organismsDiffer>false</organismsDiffer>
    <experiments>3</experiments>
</comment>
<comment type="interaction">
    <interactant intactId="EBI-10172290">
        <id>P60409</id>
    </interactant>
    <interactant intactId="EBI-11090299">
        <id>Q9H7X3</id>
        <label>ZNF696</label>
    </interactant>
    <organismsDiffer>false</organismsDiffer>
    <experiments>5</experiments>
</comment>
<comment type="interaction">
    <interactant intactId="EBI-10172290">
        <id>P60409</id>
    </interactant>
    <interactant intactId="EBI-10265733">
        <id>Q8N508</id>
        <label>ZNF697</label>
    </interactant>
    <organismsDiffer>false</organismsDiffer>
    <experiments>3</experiments>
</comment>
<comment type="interaction">
    <interactant intactId="EBI-10172290">
        <id>P60409</id>
    </interactant>
    <interactant intactId="EBI-748111">
        <id>Q96C28</id>
        <label>ZNF707</label>
    </interactant>
    <organismsDiffer>false</organismsDiffer>
    <experiments>3</experiments>
</comment>
<comment type="interaction">
    <interactant intactId="EBI-10172290">
        <id>P60409</id>
    </interactant>
    <interactant intactId="EBI-745775">
        <id>Q96H86</id>
        <label>ZNF764</label>
    </interactant>
    <organismsDiffer>false</organismsDiffer>
    <experiments>3</experiments>
</comment>
<comment type="interaction">
    <interactant intactId="EBI-10172290">
        <id>P60409</id>
    </interactant>
    <interactant intactId="EBI-10251462">
        <id>Q6NX45</id>
        <label>ZNF774</label>
    </interactant>
    <organismsDiffer>false</organismsDiffer>
    <experiments>3</experiments>
</comment>
<comment type="interaction">
    <interactant intactId="EBI-10172290">
        <id>P60409</id>
    </interactant>
    <interactant intactId="EBI-10291463">
        <id>Q96MU6</id>
        <label>ZNF778</label>
    </interactant>
    <organismsDiffer>false</organismsDiffer>
    <experiments>3</experiments>
</comment>
<comment type="interaction">
    <interactant intactId="EBI-10172290">
        <id>P60409</id>
    </interactant>
    <interactant intactId="EBI-10265203">
        <id>Q8N393</id>
        <label>ZNF786</label>
    </interactant>
    <organismsDiffer>false</organismsDiffer>
    <experiments>3</experiments>
</comment>
<comment type="interaction">
    <interactant intactId="EBI-10172290">
        <id>P60409</id>
    </interactant>
    <interactant intactId="EBI-10240849">
        <id>Q3KQV3</id>
        <label>ZNF792</label>
    </interactant>
    <organismsDiffer>false</organismsDiffer>
    <experiments>3</experiments>
</comment>
<comment type="interaction">
    <interactant intactId="EBI-10172290">
        <id>P60409</id>
    </interactant>
    <interactant intactId="EBI-11962574">
        <id>Q96EG3</id>
        <label>ZNF837</label>
    </interactant>
    <organismsDiffer>false</organismsDiffer>
    <experiments>3</experiments>
</comment>
<comment type="interaction">
    <interactant intactId="EBI-10172290">
        <id>P60409</id>
    </interactant>
    <interactant intactId="EBI-10225757">
        <id>Q08AG5</id>
        <label>ZNF844</label>
    </interactant>
    <organismsDiffer>false</organismsDiffer>
    <experiments>3</experiments>
</comment>
<comment type="interaction">
    <interactant intactId="EBI-10172290">
        <id>P60409</id>
    </interactant>
    <interactant intactId="EBI-10234020">
        <id>Q147U1</id>
        <label>ZNF846</label>
    </interactant>
    <organismsDiffer>false</organismsDiffer>
    <experiments>3</experiments>
</comment>
<comment type="interaction">
    <interactant intactId="EBI-10172290">
        <id>P60409</id>
    </interactant>
    <interactant intactId="EBI-347522">
        <id>O43257</id>
        <label>ZNHIT1</label>
    </interactant>
    <organismsDiffer>false</organismsDiffer>
    <experiments>3</experiments>
</comment>
<comment type="interaction">
    <interactant intactId="EBI-10172290">
        <id>P60409</id>
    </interactant>
    <interactant intactId="EBI-14934888">
        <id>Q96SZ4</id>
        <label>ZSCAN10</label>
    </interactant>
    <organismsDiffer>false</organismsDiffer>
    <experiments>3</experiments>
</comment>
<comment type="interaction">
    <interactant intactId="EBI-10172290">
        <id>P60409</id>
    </interactant>
    <interactant intactId="EBI-10281938">
        <id>Q9Y5A6</id>
        <label>ZSCAN21</label>
    </interactant>
    <organismsDiffer>false</organismsDiffer>
    <experiments>3</experiments>
</comment>
<comment type="interaction">
    <interactant intactId="EBI-10172290">
        <id>P60409</id>
    </interactant>
    <interactant intactId="EBI-3920053">
        <id>Q16670</id>
        <label>ZSCAN26</label>
    </interactant>
    <organismsDiffer>false</organismsDiffer>
    <experiments>7</experiments>
</comment>
<comment type="interaction">
    <interactant intactId="EBI-10172290">
        <id>P60409</id>
    </interactant>
    <interactant intactId="EBI-10175366">
        <id>B0FTY2</id>
    </interactant>
    <organismsDiffer>false</organismsDiffer>
    <experiments>3</experiments>
</comment>
<comment type="interaction">
    <interactant intactId="EBI-10172290">
        <id>P60409</id>
    </interactant>
    <interactant intactId="EBI-10242473">
        <id>Q53FW8</id>
    </interactant>
    <organismsDiffer>false</organismsDiffer>
    <experiments>3</experiments>
</comment>
<comment type="interaction">
    <interactant intactId="EBI-10172290">
        <id>P60409</id>
    </interactant>
    <interactant intactId="EBI-10243533">
        <id>Q5BKY6</id>
    </interactant>
    <organismsDiffer>false</organismsDiffer>
    <experiments>3</experiments>
</comment>
<comment type="interaction">
    <interactant intactId="EBI-10172290">
        <id>P60409</id>
    </interactant>
    <interactant intactId="EBI-10248413">
        <id>Q5XG85</id>
    </interactant>
    <organismsDiffer>false</organismsDiffer>
    <experiments>3</experiments>
</comment>
<comment type="interaction">
    <interactant intactId="EBI-10172290">
        <id>P60409</id>
    </interactant>
    <interactant intactId="EBI-10307481">
        <id>Q9H6F0</id>
    </interactant>
    <organismsDiffer>false</organismsDiffer>
    <experiments>3</experiments>
</comment>
<comment type="tissue specificity">
    <text evidence="1 2">Restricted to a narrow region of the hair fiber cuticle, lying approximately 20 cell layers above the apex of the dermal papilla of the hair root; not detected in any other tissues.</text>
</comment>
<comment type="similarity">
    <text evidence="3">Belongs to the KRTAP type 10 family.</text>
</comment>
<gene>
    <name type="primary">KRTAP10-7</name>
    <name type="synonym">KAP10.7</name>
    <name type="synonym">KAP18-7</name>
    <name type="synonym">KRTAP10.7</name>
    <name type="synonym">KRTAP18-7</name>
    <name type="synonym">KRTAP18.7</name>
</gene>
<feature type="chain" id="PRO_0000185215" description="Keratin-associated protein 10-7">
    <location>
        <begin position="1"/>
        <end position="370"/>
    </location>
</feature>
<feature type="repeat" description="1">
    <location>
        <begin position="41"/>
        <end position="45"/>
    </location>
</feature>
<feature type="repeat" description="2">
    <location>
        <begin position="46"/>
        <end position="50"/>
    </location>
</feature>
<feature type="repeat" description="3">
    <location>
        <begin position="67"/>
        <end position="71"/>
    </location>
</feature>
<feature type="repeat" description="4">
    <location>
        <begin position="89"/>
        <end position="93"/>
    </location>
</feature>
<feature type="repeat" description="5">
    <location>
        <begin position="99"/>
        <end position="103"/>
    </location>
</feature>
<feature type="repeat" description="6">
    <location>
        <begin position="109"/>
        <end position="113"/>
    </location>
</feature>
<feature type="repeat" description="7">
    <location>
        <begin position="114"/>
        <end position="118"/>
    </location>
</feature>
<feature type="repeat" description="8">
    <location>
        <begin position="119"/>
        <end position="123"/>
    </location>
</feature>
<feature type="repeat" description="9">
    <location>
        <begin position="135"/>
        <end position="139"/>
    </location>
</feature>
<feature type="repeat" description="10">
    <location>
        <begin position="145"/>
        <end position="149"/>
    </location>
</feature>
<feature type="repeat" description="11">
    <location>
        <begin position="155"/>
        <end position="159"/>
    </location>
</feature>
<feature type="repeat" description="12">
    <location>
        <begin position="160"/>
        <end position="164"/>
    </location>
</feature>
<feature type="repeat" description="13">
    <location>
        <begin position="172"/>
        <end position="176"/>
    </location>
</feature>
<feature type="repeat" description="14">
    <location>
        <begin position="186"/>
        <end position="190"/>
    </location>
</feature>
<feature type="repeat" description="15">
    <location>
        <begin position="208"/>
        <end position="212"/>
    </location>
</feature>
<feature type="repeat" description="16">
    <location>
        <begin position="218"/>
        <end position="222"/>
    </location>
</feature>
<feature type="repeat" description="17">
    <location>
        <begin position="228"/>
        <end position="232"/>
    </location>
</feature>
<feature type="repeat" description="18">
    <location>
        <begin position="233"/>
        <end position="237"/>
    </location>
</feature>
<feature type="repeat" description="19">
    <location>
        <begin position="238"/>
        <end position="242"/>
    </location>
</feature>
<feature type="repeat" description="20">
    <location>
        <begin position="250"/>
        <end position="254"/>
    </location>
</feature>
<feature type="repeat" description="21">
    <location>
        <begin position="255"/>
        <end position="259"/>
    </location>
</feature>
<feature type="repeat" description="22">
    <location>
        <begin position="265"/>
        <end position="269"/>
    </location>
</feature>
<feature type="repeat" description="23">
    <location>
        <begin position="270"/>
        <end position="274"/>
    </location>
</feature>
<feature type="repeat" description="24">
    <location>
        <begin position="275"/>
        <end position="279"/>
    </location>
</feature>
<feature type="repeat" description="25">
    <location>
        <begin position="287"/>
        <end position="291"/>
    </location>
</feature>
<feature type="repeat" description="26">
    <location>
        <begin position="297"/>
        <end position="301"/>
    </location>
</feature>
<feature type="repeat" description="27">
    <location>
        <begin position="302"/>
        <end position="306"/>
    </location>
</feature>
<feature type="repeat" description="28">
    <location>
        <begin position="321"/>
        <end position="325"/>
    </location>
</feature>
<feature type="repeat" description="29">
    <location>
        <begin position="339"/>
        <end position="343"/>
    </location>
</feature>
<feature type="repeat" description="30">
    <location>
        <begin position="359"/>
        <end position="363"/>
    </location>
</feature>
<feature type="region of interest" description="30 X 5 AA repeats of C-C-X(3)">
    <location>
        <begin position="36"/>
        <end position="363"/>
    </location>
</feature>
<feature type="sequence variant" id="VAR_047852" description="In dbSNP:rs944419.">
    <original>V</original>
    <variation>M</variation>
    <location>
        <position position="111"/>
    </location>
</feature>
<feature type="sequence variant" id="VAR_060051" description="In dbSNP:rs233308.">
    <original>Y</original>
    <variation>C</variation>
    <location>
        <position position="124"/>
    </location>
</feature>
<feature type="sequence variant" id="VAR_047853" description="In dbSNP:rs363877.">
    <original>K</original>
    <variation>Q</variation>
    <location>
        <position position="215"/>
    </location>
</feature>
<feature type="sequence variant" id="VAR_047854" description="In dbSNP:rs446817.">
    <original>T</original>
    <variation>S</variation>
    <location>
        <position position="285"/>
    </location>
</feature>
<feature type="sequence variant" id="VAR_047855" description="In dbSNP:rs369720.">
    <original>A</original>
    <variation>T</variation>
    <location>
        <position position="320"/>
    </location>
</feature>
<reference key="1">
    <citation type="journal article" date="2004" name="Genomics">
        <title>A cluster of 21 keratin-associated protein genes within introns of another gene on human chromosome 21q22.3.</title>
        <authorList>
            <person name="Shibuya K."/>
            <person name="Obayashi I."/>
            <person name="Asakawa S."/>
            <person name="Minoshima S."/>
            <person name="Kudoh J."/>
            <person name="Shimizu N."/>
        </authorList>
    </citation>
    <scope>NUCLEOTIDE SEQUENCE [MRNA]</scope>
    <scope>TISSUE SPECIFICITY</scope>
    <source>
        <tissue>Hair root</tissue>
    </source>
</reference>
<reference key="2">
    <citation type="journal article" date="2000" name="Nature">
        <title>The DNA sequence of human chromosome 21.</title>
        <authorList>
            <person name="Hattori M."/>
            <person name="Fujiyama A."/>
            <person name="Taylor T.D."/>
            <person name="Watanabe H."/>
            <person name="Yada T."/>
            <person name="Park H.-S."/>
            <person name="Toyoda A."/>
            <person name="Ishii K."/>
            <person name="Totoki Y."/>
            <person name="Choi D.-K."/>
            <person name="Groner Y."/>
            <person name="Soeda E."/>
            <person name="Ohki M."/>
            <person name="Takagi T."/>
            <person name="Sakaki Y."/>
            <person name="Taudien S."/>
            <person name="Blechschmidt K."/>
            <person name="Polley A."/>
            <person name="Menzel U."/>
            <person name="Delabar J."/>
            <person name="Kumpf K."/>
            <person name="Lehmann R."/>
            <person name="Patterson D."/>
            <person name="Reichwald K."/>
            <person name="Rump A."/>
            <person name="Schillhabel M."/>
            <person name="Schudy A."/>
            <person name="Zimmermann W."/>
            <person name="Rosenthal A."/>
            <person name="Kudoh J."/>
            <person name="Shibuya K."/>
            <person name="Kawasaki K."/>
            <person name="Asakawa S."/>
            <person name="Shintani A."/>
            <person name="Sasaki T."/>
            <person name="Nagamine K."/>
            <person name="Mitsuyama S."/>
            <person name="Antonarakis S.E."/>
            <person name="Minoshima S."/>
            <person name="Shimizu N."/>
            <person name="Nordsiek G."/>
            <person name="Hornischer K."/>
            <person name="Brandt P."/>
            <person name="Scharfe M."/>
            <person name="Schoen O."/>
            <person name="Desario A."/>
            <person name="Reichelt J."/>
            <person name="Kauer G."/>
            <person name="Bloecker H."/>
            <person name="Ramser J."/>
            <person name="Beck A."/>
            <person name="Klages S."/>
            <person name="Hennig S."/>
            <person name="Riesselmann L."/>
            <person name="Dagand E."/>
            <person name="Wehrmeyer S."/>
            <person name="Borzym K."/>
            <person name="Gardiner K."/>
            <person name="Nizetic D."/>
            <person name="Francis F."/>
            <person name="Lehrach H."/>
            <person name="Reinhardt R."/>
            <person name="Yaspo M.-L."/>
        </authorList>
    </citation>
    <scope>NUCLEOTIDE SEQUENCE [LARGE SCALE GENOMIC DNA]</scope>
</reference>
<reference key="3">
    <citation type="submission" date="2005-09" db="EMBL/GenBank/DDBJ databases">
        <authorList>
            <person name="Mural R.J."/>
            <person name="Istrail S."/>
            <person name="Sutton G.G."/>
            <person name="Florea L."/>
            <person name="Halpern A.L."/>
            <person name="Mobarry C.M."/>
            <person name="Lippert R."/>
            <person name="Walenz B."/>
            <person name="Shatkay H."/>
            <person name="Dew I."/>
            <person name="Miller J.R."/>
            <person name="Flanigan M.J."/>
            <person name="Edwards N.J."/>
            <person name="Bolanos R."/>
            <person name="Fasulo D."/>
            <person name="Halldorsson B.V."/>
            <person name="Hannenhalli S."/>
            <person name="Turner R."/>
            <person name="Yooseph S."/>
            <person name="Lu F."/>
            <person name="Nusskern D.R."/>
            <person name="Shue B.C."/>
            <person name="Zheng X.H."/>
            <person name="Zhong F."/>
            <person name="Delcher A.L."/>
            <person name="Huson D.H."/>
            <person name="Kravitz S.A."/>
            <person name="Mouchard L."/>
            <person name="Reinert K."/>
            <person name="Remington K.A."/>
            <person name="Clark A.G."/>
            <person name="Waterman M.S."/>
            <person name="Eichler E.E."/>
            <person name="Adams M.D."/>
            <person name="Hunkapiller M.W."/>
            <person name="Myers E.W."/>
            <person name="Venter J.C."/>
        </authorList>
    </citation>
    <scope>NUCLEOTIDE SEQUENCE [LARGE SCALE GENOMIC DNA]</scope>
</reference>
<reference key="4">
    <citation type="journal article" date="2004" name="Genome Res.">
        <title>The status, quality, and expansion of the NIH full-length cDNA project: the Mammalian Gene Collection (MGC).</title>
        <authorList>
            <consortium name="The MGC Project Team"/>
        </authorList>
    </citation>
    <scope>NUCLEOTIDE SEQUENCE [LARGE SCALE MRNA]</scope>
</reference>
<reference key="5">
    <citation type="journal article" date="2004" name="J. Invest. Dermatol.">
        <title>Hair keratin associated proteins: characterization of a second high sulfur KAP gene domain on human chromosome 21.</title>
        <authorList>
            <person name="Rogers M.A."/>
            <person name="Langbein L."/>
            <person name="Winter H."/>
            <person name="Beckmann I."/>
            <person name="Praetzel S."/>
            <person name="Schweizer J."/>
        </authorList>
    </citation>
    <scope>NUCLEOTIDE SEQUENCE [MRNA] OF 318-370</scope>
    <scope>TISSUE SPECIFICITY</scope>
    <source>
        <tissue>Scalp</tissue>
    </source>
</reference>
<keyword id="KW-0416">Keratin</keyword>
<keyword id="KW-1267">Proteomics identification</keyword>
<keyword id="KW-1185">Reference proteome</keyword>
<keyword id="KW-0677">Repeat</keyword>
<accession>P60409</accession>
<accession>Q0VDJ8</accession>
<accession>Q70LJ2</accession>
<proteinExistence type="evidence at protein level"/>
<protein>
    <recommendedName>
        <fullName>Keratin-associated protein 10-7</fullName>
    </recommendedName>
    <alternativeName>
        <fullName>High sulfur keratin-associated protein 10.7</fullName>
    </alternativeName>
    <alternativeName>
        <fullName>Keratin-associated protein 10.7</fullName>
    </alternativeName>
    <alternativeName>
        <fullName>Keratin-associated protein 18-7</fullName>
    </alternativeName>
    <alternativeName>
        <fullName>Keratin-associated protein 18.7</fullName>
    </alternativeName>
</protein>
<dbReference type="EMBL" id="AB076354">
    <property type="protein sequence ID" value="BAD01541.1"/>
    <property type="molecule type" value="mRNA"/>
</dbReference>
<dbReference type="EMBL" id="AL773602">
    <property type="status" value="NOT_ANNOTATED_CDS"/>
    <property type="molecule type" value="Genomic_DNA"/>
</dbReference>
<dbReference type="EMBL" id="CH471079">
    <property type="protein sequence ID" value="EAX09413.1"/>
    <property type="molecule type" value="Genomic_DNA"/>
</dbReference>
<dbReference type="EMBL" id="BC119643">
    <property type="protein sequence ID" value="AAI19644.1"/>
    <property type="molecule type" value="mRNA"/>
</dbReference>
<dbReference type="EMBL" id="AJ566385">
    <property type="protein sequence ID" value="CAD97465.1"/>
    <property type="molecule type" value="mRNA"/>
</dbReference>
<dbReference type="CCDS" id="CCDS74803.1"/>
<dbReference type="RefSeq" id="NP_941962.1">
    <property type="nucleotide sequence ID" value="NM_198689.3"/>
</dbReference>
<dbReference type="BioGRID" id="132126">
    <property type="interactions" value="293"/>
</dbReference>
<dbReference type="FunCoup" id="P60409">
    <property type="interactions" value="131"/>
</dbReference>
<dbReference type="IntAct" id="P60409">
    <property type="interactions" value="280"/>
</dbReference>
<dbReference type="STRING" id="9606.ENSP00000476821"/>
<dbReference type="GlyGen" id="P60409">
    <property type="glycosylation" value="1 site"/>
</dbReference>
<dbReference type="iPTMnet" id="P60409"/>
<dbReference type="PhosphoSitePlus" id="P60409"/>
<dbReference type="BioMuta" id="KRTAP10-7"/>
<dbReference type="DMDM" id="116242611"/>
<dbReference type="MassIVE" id="P60409"/>
<dbReference type="PaxDb" id="9606-ENSP00000476821"/>
<dbReference type="PeptideAtlas" id="P60409"/>
<dbReference type="Antibodypedia" id="76638">
    <property type="antibodies" value="2 antibodies from 2 providers"/>
</dbReference>
<dbReference type="DNASU" id="386675"/>
<dbReference type="Ensembl" id="ENST00000609664.2">
    <property type="protein sequence ID" value="ENSP00000476821.1"/>
    <property type="gene ID" value="ENSG00000272804.3"/>
</dbReference>
<dbReference type="GeneID" id="386675"/>
<dbReference type="KEGG" id="hsa:386675"/>
<dbReference type="MANE-Select" id="ENST00000609664.2">
    <property type="protein sequence ID" value="ENSP00000476821.1"/>
    <property type="RefSeq nucleotide sequence ID" value="NM_198689.3"/>
    <property type="RefSeq protein sequence ID" value="NP_941962.1"/>
</dbReference>
<dbReference type="UCSC" id="uc032qbr.1">
    <property type="organism name" value="human"/>
</dbReference>
<dbReference type="AGR" id="HGNC:22970"/>
<dbReference type="CTD" id="386675"/>
<dbReference type="GeneCards" id="KRTAP10-7"/>
<dbReference type="HGNC" id="HGNC:22970">
    <property type="gene designation" value="KRTAP10-7"/>
</dbReference>
<dbReference type="HPA" id="ENSG00000272804">
    <property type="expression patterns" value="Tissue enriched (skin)"/>
</dbReference>
<dbReference type="neXtProt" id="NX_P60409"/>
<dbReference type="OpenTargets" id="ENSG00000272804"/>
<dbReference type="PharmGKB" id="PA134976547"/>
<dbReference type="VEuPathDB" id="HostDB:ENSG00000272804"/>
<dbReference type="eggNOG" id="KOG4726">
    <property type="taxonomic scope" value="Eukaryota"/>
</dbReference>
<dbReference type="GeneTree" id="ENSGT00940000163845"/>
<dbReference type="HOGENOM" id="CLU_062832_0_0_1"/>
<dbReference type="InParanoid" id="P60409"/>
<dbReference type="OMA" id="AKEACCC"/>
<dbReference type="OrthoDB" id="9635131at2759"/>
<dbReference type="PAN-GO" id="P60409">
    <property type="GO annotations" value="0 GO annotations based on evolutionary models"/>
</dbReference>
<dbReference type="PhylomeDB" id="P60409"/>
<dbReference type="PathwayCommons" id="P60409"/>
<dbReference type="Reactome" id="R-HSA-6805567">
    <property type="pathway name" value="Keratinization"/>
</dbReference>
<dbReference type="SignaLink" id="P60409"/>
<dbReference type="BioGRID-ORCS" id="386675">
    <property type="hits" value="2 hits in 308 CRISPR screens"/>
</dbReference>
<dbReference type="GenomeRNAi" id="386675"/>
<dbReference type="Pharos" id="P60409">
    <property type="development level" value="Tdark"/>
</dbReference>
<dbReference type="PRO" id="PR:P60409"/>
<dbReference type="Proteomes" id="UP000005640">
    <property type="component" value="Chromosome 21"/>
</dbReference>
<dbReference type="RNAct" id="P60409">
    <property type="molecule type" value="protein"/>
</dbReference>
<dbReference type="Bgee" id="ENSG00000272804">
    <property type="expression patterns" value="Expressed in male germ line stem cell (sensu Vertebrata) in testis and 8 other cell types or tissues"/>
</dbReference>
<dbReference type="GO" id="GO:0005829">
    <property type="term" value="C:cytosol"/>
    <property type="evidence" value="ECO:0000304"/>
    <property type="project" value="Reactome"/>
</dbReference>
<dbReference type="GO" id="GO:0045095">
    <property type="term" value="C:keratin filament"/>
    <property type="evidence" value="ECO:0007669"/>
    <property type="project" value="InterPro"/>
</dbReference>
<dbReference type="GO" id="GO:0042802">
    <property type="term" value="F:identical protein binding"/>
    <property type="evidence" value="ECO:0000353"/>
    <property type="project" value="IntAct"/>
</dbReference>
<dbReference type="InterPro" id="IPR002494">
    <property type="entry name" value="KAP"/>
</dbReference>
<dbReference type="PANTHER" id="PTHR23262">
    <property type="entry name" value="KERATIN ASSOCIATED PROTEIN"/>
    <property type="match status" value="1"/>
</dbReference>
<dbReference type="PANTHER" id="PTHR23262:SF170">
    <property type="entry name" value="KERATIN-ASSOCIATED PROTEIN 10-9"/>
    <property type="match status" value="1"/>
</dbReference>
<dbReference type="Pfam" id="PF13885">
    <property type="entry name" value="Keratin_B2_2"/>
    <property type="match status" value="3"/>
</dbReference>
<organism>
    <name type="scientific">Homo sapiens</name>
    <name type="common">Human</name>
    <dbReference type="NCBI Taxonomy" id="9606"/>
    <lineage>
        <taxon>Eukaryota</taxon>
        <taxon>Metazoa</taxon>
        <taxon>Chordata</taxon>
        <taxon>Craniata</taxon>
        <taxon>Vertebrata</taxon>
        <taxon>Euteleostomi</taxon>
        <taxon>Mammalia</taxon>
        <taxon>Eutheria</taxon>
        <taxon>Euarchontoglires</taxon>
        <taxon>Primates</taxon>
        <taxon>Haplorrhini</taxon>
        <taxon>Catarrhini</taxon>
        <taxon>Hominidae</taxon>
        <taxon>Homo</taxon>
    </lineage>
</organism>
<name>KR107_HUMAN</name>
<evidence type="ECO:0000269" key="1">
    <source>
    </source>
</evidence>
<evidence type="ECO:0000269" key="2">
    <source>
    </source>
</evidence>
<evidence type="ECO:0000305" key="3"/>